<evidence type="ECO:0000250" key="1">
    <source>
        <dbReference type="UniProtKB" id="Q00342"/>
    </source>
</evidence>
<evidence type="ECO:0000255" key="2"/>
<evidence type="ECO:0000255" key="3">
    <source>
        <dbReference type="PROSITE-ProRule" id="PRU00114"/>
    </source>
</evidence>
<evidence type="ECO:0000255" key="4">
    <source>
        <dbReference type="PROSITE-ProRule" id="PRU00159"/>
    </source>
</evidence>
<evidence type="ECO:0000255" key="5">
    <source>
        <dbReference type="PROSITE-ProRule" id="PRU10028"/>
    </source>
</evidence>
<evidence type="ECO:0000269" key="6">
    <source>
    </source>
</evidence>
<evidence type="ECO:0000269" key="7">
    <source>
    </source>
</evidence>
<evidence type="ECO:0000269" key="8">
    <source>
    </source>
</evidence>
<evidence type="ECO:0000269" key="9">
    <source>
    </source>
</evidence>
<evidence type="ECO:0000269" key="10">
    <source>
    </source>
</evidence>
<evidence type="ECO:0000269" key="11">
    <source>
    </source>
</evidence>
<evidence type="ECO:0000269" key="12">
    <source>
    </source>
</evidence>
<evidence type="ECO:0000269" key="13">
    <source>
    </source>
</evidence>
<evidence type="ECO:0000269" key="14">
    <source>
    </source>
</evidence>
<evidence type="ECO:0000269" key="15">
    <source>
    </source>
</evidence>
<evidence type="ECO:0000269" key="16">
    <source>
    </source>
</evidence>
<evidence type="ECO:0000269" key="17">
    <source>
    </source>
</evidence>
<evidence type="ECO:0000269" key="18">
    <source>
    </source>
</evidence>
<evidence type="ECO:0000269" key="19">
    <source>
    </source>
</evidence>
<evidence type="ECO:0000269" key="20">
    <source>
    </source>
</evidence>
<evidence type="ECO:0000269" key="21">
    <source>
    </source>
</evidence>
<evidence type="ECO:0000269" key="22">
    <source>
    </source>
</evidence>
<evidence type="ECO:0000269" key="23">
    <source>
    </source>
</evidence>
<evidence type="ECO:0000269" key="24">
    <source>
    </source>
</evidence>
<evidence type="ECO:0000269" key="25">
    <source>
    </source>
</evidence>
<evidence type="ECO:0000269" key="26">
    <source>
    </source>
</evidence>
<evidence type="ECO:0000269" key="27">
    <source>
    </source>
</evidence>
<evidence type="ECO:0000269" key="28">
    <source>
    </source>
</evidence>
<evidence type="ECO:0000269" key="29">
    <source>
    </source>
</evidence>
<evidence type="ECO:0000269" key="30">
    <source>
    </source>
</evidence>
<evidence type="ECO:0000269" key="31">
    <source>
    </source>
</evidence>
<evidence type="ECO:0000269" key="32">
    <source>
    </source>
</evidence>
<evidence type="ECO:0000269" key="33">
    <source>
    </source>
</evidence>
<evidence type="ECO:0000269" key="34">
    <source ref="4"/>
</evidence>
<evidence type="ECO:0000303" key="35">
    <source>
    </source>
</evidence>
<evidence type="ECO:0000305" key="36"/>
<evidence type="ECO:0007744" key="37">
    <source>
    </source>
</evidence>
<evidence type="ECO:0007829" key="38">
    <source>
        <dbReference type="PDB" id="1RJB"/>
    </source>
</evidence>
<sequence>MPALARDGGQLPLLVVFSAMIFGTITNQDLPVIKCVLINHKNNDSSVGKSSSYPMVSESPEDLGCALRPQSSGTVYEAAAVEVDVSASITLQVLVDAPGNISCLWVFKHSSLNCQPHFDLQNRGVVSMVILKMTETQAGEYLLFIQSEATNYTILFTVSIRNTLLYTLRRPYFRKMENQDALVCISESVPEPIVEWVLCDSQGESCKEESPAVVKKEEKVLHELFGTDIRCCARNELGRECTRLFTIDLNQTPQTTLPQLFLKVGEPLWIRCKAVHVNHGFGLTWELENKALEEGNYFEMSTYSTNRTMIRILFAFVSSVARNDTGYYTCSSSKHPSQSALVTIVEKGFINATNSSEDYEIDQYEEFCFSVRFKAYPQIRCTWTFSRKSFPCEQKGLDNGYSISKFCNHKHQPGEYIFHAENDDAQFTKMFTLNIRRKPQVLAEASASQASCFSDGYPLPSWTWKKCSDKSPNCTEEITEGVWNRKANRKVFGQWVSSSTLNMSEAIKGFLVKCCAYNSLGTSCETILLNSPGPFPFIQDNISFYATIGVCLLFIVVLTLLICHKYKKQFRYESQLQMVQVTGSSDNEYFYVDFREYEYDLKWEFPRENLEFGKVLGSGAFGKVMNATAYGISKTGVSIQVAVKMLKEKADSSEREALMSELKMMTQLGSHENIVNLLGACTLSGPIYLIFEYCCYGDLLNYLRSKREKFHRTWTEIFKEHNFSFYPTFQSHPNSSMPGSREVQIHPDSDQISGLHGNSFHSEDEIEYENQKRLEEEEDLNVLTFEDLLCFAYQVAKGMEFLEFKSCVHRDLAARNVLVTHGKVVKICDFGLARDIMSDSNYVVRGNARLPVKWMAPESLFEGIYTIKSDVWSYGILLWEIFSLGVNPYPGIPVDANFYKLIQNGFKMDQPFYATEEIYIIMQSCWAFDSRKRPSFPNLTSFLGCQLADAEEAMYQNVDGRVSECPHTYQNRRPFSREMDLGLLSPQAQVEDS</sequence>
<organism>
    <name type="scientific">Homo sapiens</name>
    <name type="common">Human</name>
    <dbReference type="NCBI Taxonomy" id="9606"/>
    <lineage>
        <taxon>Eukaryota</taxon>
        <taxon>Metazoa</taxon>
        <taxon>Chordata</taxon>
        <taxon>Craniata</taxon>
        <taxon>Vertebrata</taxon>
        <taxon>Euteleostomi</taxon>
        <taxon>Mammalia</taxon>
        <taxon>Eutheria</taxon>
        <taxon>Euarchontoglires</taxon>
        <taxon>Primates</taxon>
        <taxon>Haplorrhini</taxon>
        <taxon>Catarrhini</taxon>
        <taxon>Hominidae</taxon>
        <taxon>Homo</taxon>
    </lineage>
</organism>
<proteinExistence type="evidence at protein level"/>
<name>FLT3_HUMAN</name>
<protein>
    <recommendedName>
        <fullName>Receptor-type tyrosine-protein kinase FLT3</fullName>
        <ecNumber>2.7.10.1</ecNumber>
    </recommendedName>
    <alternativeName>
        <fullName>FL cytokine receptor</fullName>
    </alternativeName>
    <alternativeName>
        <fullName>Fetal liver kinase-2</fullName>
        <shortName>FLK-2</shortName>
    </alternativeName>
    <alternativeName>
        <fullName>Fms-like tyrosine kinase 3</fullName>
        <shortName>FLT-3</shortName>
    </alternativeName>
    <alternativeName>
        <fullName>Stem cell tyrosine kinase 1</fullName>
        <shortName>STK-1</shortName>
    </alternativeName>
    <cdAntigenName>CD135</cdAntigenName>
</protein>
<dbReference type="EC" id="2.7.10.1"/>
<dbReference type="EMBL" id="U02687">
    <property type="protein sequence ID" value="AAA18947.1"/>
    <property type="molecule type" value="mRNA"/>
</dbReference>
<dbReference type="EMBL" id="Z26652">
    <property type="protein sequence ID" value="CAA81393.1"/>
    <property type="molecule type" value="mRNA"/>
</dbReference>
<dbReference type="EMBL" id="AL356915">
    <property type="status" value="NOT_ANNOTATED_CDS"/>
    <property type="molecule type" value="Genomic_DNA"/>
</dbReference>
<dbReference type="EMBL" id="AL445262">
    <property type="status" value="NOT_ANNOTATED_CDS"/>
    <property type="molecule type" value="Genomic_DNA"/>
</dbReference>
<dbReference type="EMBL" id="AL591024">
    <property type="status" value="NOT_ANNOTATED_CDS"/>
    <property type="molecule type" value="Genomic_DNA"/>
</dbReference>
<dbReference type="EMBL" id="CH471075">
    <property type="protein sequence ID" value="EAX08424.1"/>
    <property type="molecule type" value="Genomic_DNA"/>
</dbReference>
<dbReference type="EMBL" id="BC126350">
    <property type="protein sequence ID" value="AAI26351.1"/>
    <property type="molecule type" value="mRNA"/>
</dbReference>
<dbReference type="EMBL" id="BC144039">
    <property type="protein sequence ID" value="AAI44040.1"/>
    <property type="molecule type" value="mRNA"/>
</dbReference>
<dbReference type="EMBL" id="BC144040">
    <property type="protein sequence ID" value="AAI44041.1"/>
    <property type="molecule type" value="mRNA"/>
</dbReference>
<dbReference type="EMBL" id="L36162">
    <property type="protein sequence ID" value="AAA35487.1"/>
    <property type="molecule type" value="mRNA"/>
</dbReference>
<dbReference type="CCDS" id="CCDS31953.1">
    <molecule id="P36888-1"/>
</dbReference>
<dbReference type="PIR" id="A36873">
    <property type="entry name" value="A36873"/>
</dbReference>
<dbReference type="PIR" id="A39061">
    <property type="entry name" value="A39061"/>
</dbReference>
<dbReference type="RefSeq" id="NP_004110.2">
    <molecule id="P36888-1"/>
    <property type="nucleotide sequence ID" value="NM_004119.3"/>
</dbReference>
<dbReference type="PDB" id="1RJB">
    <property type="method" value="X-ray"/>
    <property type="resolution" value="2.10 A"/>
    <property type="chains" value="A=564-958"/>
</dbReference>
<dbReference type="PDB" id="3QS7">
    <property type="method" value="X-ray"/>
    <property type="resolution" value="4.30 A"/>
    <property type="chains" value="E/F/G/H=27-436"/>
</dbReference>
<dbReference type="PDB" id="3QS9">
    <property type="method" value="X-ray"/>
    <property type="resolution" value="7.80 A"/>
    <property type="chains" value="E/F/G/H=27-540"/>
</dbReference>
<dbReference type="PDB" id="4RT7">
    <property type="method" value="X-ray"/>
    <property type="resolution" value="3.10 A"/>
    <property type="chains" value="A=564-958"/>
</dbReference>
<dbReference type="PDB" id="4XUF">
    <property type="method" value="X-ray"/>
    <property type="resolution" value="3.20 A"/>
    <property type="chains" value="A/B=600-947"/>
</dbReference>
<dbReference type="PDB" id="5X02">
    <property type="method" value="X-ray"/>
    <property type="resolution" value="2.40 A"/>
    <property type="chains" value="A=564-958"/>
</dbReference>
<dbReference type="PDB" id="6IL3">
    <property type="method" value="X-ray"/>
    <property type="resolution" value="2.50 A"/>
    <property type="chains" value="A=564-958"/>
</dbReference>
<dbReference type="PDB" id="6JQR">
    <property type="method" value="X-ray"/>
    <property type="resolution" value="2.20 A"/>
    <property type="chains" value="A=571-951"/>
</dbReference>
<dbReference type="PDB" id="7QDP">
    <property type="method" value="X-ray"/>
    <property type="resolution" value="3.69 A"/>
    <property type="chains" value="E/F/G/H=1-541"/>
</dbReference>
<dbReference type="PDB" id="7ZV9">
    <property type="method" value="X-ray"/>
    <property type="resolution" value="4.51 A"/>
    <property type="chains" value="B/D/F/H/J/L/N/P=1-541"/>
</dbReference>
<dbReference type="PDB" id="8XB1">
    <property type="method" value="X-ray"/>
    <property type="resolution" value="2.85 A"/>
    <property type="chains" value="A=564-958"/>
</dbReference>
<dbReference type="PDBsum" id="1RJB"/>
<dbReference type="PDBsum" id="3QS7"/>
<dbReference type="PDBsum" id="3QS9"/>
<dbReference type="PDBsum" id="4RT7"/>
<dbReference type="PDBsum" id="4XUF"/>
<dbReference type="PDBsum" id="5X02"/>
<dbReference type="PDBsum" id="6IL3"/>
<dbReference type="PDBsum" id="6JQR"/>
<dbReference type="PDBsum" id="7QDP"/>
<dbReference type="PDBsum" id="7ZV9"/>
<dbReference type="PDBsum" id="8XB1"/>
<dbReference type="SMR" id="P36888"/>
<dbReference type="BioGRID" id="108610">
    <property type="interactions" value="310"/>
</dbReference>
<dbReference type="CORUM" id="P36888"/>
<dbReference type="DIP" id="DIP-59769N"/>
<dbReference type="FunCoup" id="P36888">
    <property type="interactions" value="883"/>
</dbReference>
<dbReference type="IntAct" id="P36888">
    <property type="interactions" value="222"/>
</dbReference>
<dbReference type="MINT" id="P36888"/>
<dbReference type="STRING" id="9606.ENSP00000241453"/>
<dbReference type="BindingDB" id="P36888"/>
<dbReference type="ChEMBL" id="CHEMBL1974"/>
<dbReference type="DrugBank" id="DB12669">
    <property type="generic name" value="4SC-203"/>
</dbReference>
<dbReference type="DrugBank" id="DB12746">
    <property type="generic name" value="AKN-028"/>
</dbReference>
<dbReference type="DrugBank" id="DB12742">
    <property type="generic name" value="Amuvatinib"/>
</dbReference>
<dbReference type="DrugBank" id="DB11665">
    <property type="generic name" value="BMS-690514"/>
</dbReference>
<dbReference type="DrugBank" id="DB12267">
    <property type="generic name" value="Brigatinib"/>
</dbReference>
<dbReference type="DrugBank" id="DB17159">
    <property type="generic name" value="Denfivontinib"/>
</dbReference>
<dbReference type="DrugBank" id="DB11741">
    <property type="generic name" value="Famitinib"/>
</dbReference>
<dbReference type="DrugBank" id="DB12500">
    <property type="generic name" value="Fedratinib"/>
</dbReference>
<dbReference type="DrugBank" id="DB16050">
    <property type="generic name" value="FF-10101-01"/>
</dbReference>
<dbReference type="DrugBank" id="DB17383">
    <property type="generic name" value="FN-1501"/>
</dbReference>
<dbReference type="DrugBank" id="DB12010">
    <property type="generic name" value="Fostamatinib"/>
</dbReference>
<dbReference type="DrugBank" id="DB12141">
    <property type="generic name" value="Gilteritinib"/>
</dbReference>
<dbReference type="DrugBank" id="DB17140">
    <property type="generic name" value="JNJ-28312141"/>
</dbReference>
<dbReference type="DrugBank" id="DB06469">
    <property type="generic name" value="Lestaurtinib"/>
</dbReference>
<dbReference type="DrugBank" id="DB06080">
    <property type="generic name" value="Linifanib"/>
</dbReference>
<dbReference type="DrugBank" id="DB06595">
    <property type="generic name" value="Midostaurin"/>
</dbReference>
<dbReference type="DrugBank" id="DB16849">
    <property type="generic name" value="Mivavotinib"/>
</dbReference>
<dbReference type="DrugBank" id="DB11763">
    <property type="generic name" value="Momelotinib"/>
</dbReference>
<dbReference type="DrugBank" id="DB09079">
    <property type="generic name" value="Nintedanib"/>
</dbReference>
<dbReference type="DrugBank" id="DB11697">
    <property type="generic name" value="Pacritinib"/>
</dbReference>
<dbReference type="DrugBank" id="DB12978">
    <property type="generic name" value="Pexidartinib"/>
</dbReference>
<dbReference type="DrugBank" id="DB08901">
    <property type="generic name" value="Ponatinib"/>
</dbReference>
<dbReference type="DrugBank" id="DB15822">
    <property type="generic name" value="Pralsetinib"/>
</dbReference>
<dbReference type="DrugBank" id="DB12874">
    <property type="generic name" value="Quizartinib"/>
</dbReference>
<dbReference type="DrugBank" id="DB00398">
    <property type="generic name" value="Sorafenib"/>
</dbReference>
<dbReference type="DrugBank" id="DB01268">
    <property type="generic name" value="Sunitinib"/>
</dbReference>
<dbReference type="DrugBank" id="DB05465">
    <property type="generic name" value="Tandutinib"/>
</dbReference>
<dbReference type="DrugBank" id="DB11800">
    <property type="generic name" value="Tivozanib"/>
</dbReference>
<dbReference type="DrugBank" id="DB05014">
    <property type="generic name" value="XL999"/>
</dbReference>
<dbReference type="DrugBank" id="DB00495">
    <property type="generic name" value="Zidovudine"/>
</dbReference>
<dbReference type="DrugCentral" id="P36888"/>
<dbReference type="GuidetoPHARMACOLOGY" id="1807"/>
<dbReference type="GlyCosmos" id="P36888">
    <property type="glycosylation" value="10 sites, No reported glycans"/>
</dbReference>
<dbReference type="GlyGen" id="P36888">
    <property type="glycosylation" value="12 sites, 1 N-linked glycan (1 site)"/>
</dbReference>
<dbReference type="iPTMnet" id="P36888"/>
<dbReference type="PhosphoSitePlus" id="P36888"/>
<dbReference type="SwissPalm" id="P36888"/>
<dbReference type="BioMuta" id="FLT3"/>
<dbReference type="DMDM" id="156630887"/>
<dbReference type="CPTAC" id="CPTAC-2792"/>
<dbReference type="CPTAC" id="CPTAC-2823"/>
<dbReference type="CPTAC" id="CPTAC-3121"/>
<dbReference type="CPTAC" id="CPTAC-3122"/>
<dbReference type="jPOST" id="P36888"/>
<dbReference type="MassIVE" id="P36888"/>
<dbReference type="PaxDb" id="9606-ENSP00000241453"/>
<dbReference type="PeptideAtlas" id="P36888"/>
<dbReference type="ProteomicsDB" id="55226">
    <molecule id="P36888-1"/>
</dbReference>
<dbReference type="ProteomicsDB" id="55227">
    <molecule id="P36888-2"/>
</dbReference>
<dbReference type="ABCD" id="P36888">
    <property type="antibodies" value="40 sequenced antibodies"/>
</dbReference>
<dbReference type="Antibodypedia" id="4334">
    <property type="antibodies" value="1615 antibodies from 50 providers"/>
</dbReference>
<dbReference type="DNASU" id="2322"/>
<dbReference type="Ensembl" id="ENST00000241453.12">
    <molecule id="P36888-1"/>
    <property type="protein sequence ID" value="ENSP00000241453.7"/>
    <property type="gene ID" value="ENSG00000122025.15"/>
</dbReference>
<dbReference type="GeneID" id="2322"/>
<dbReference type="KEGG" id="hsa:2322"/>
<dbReference type="MANE-Select" id="ENST00000241453.12">
    <property type="protein sequence ID" value="ENSP00000241453.7"/>
    <property type="RefSeq nucleotide sequence ID" value="NM_004119.3"/>
    <property type="RefSeq protein sequence ID" value="NP_004110.2"/>
</dbReference>
<dbReference type="UCSC" id="uc001urw.3">
    <molecule id="P36888-1"/>
    <property type="organism name" value="human"/>
</dbReference>
<dbReference type="AGR" id="HGNC:3765"/>
<dbReference type="CTD" id="2322"/>
<dbReference type="DisGeNET" id="2322"/>
<dbReference type="GeneCards" id="FLT3"/>
<dbReference type="HGNC" id="HGNC:3765">
    <property type="gene designation" value="FLT3"/>
</dbReference>
<dbReference type="HPA" id="ENSG00000122025">
    <property type="expression patterns" value="Tissue enhanced (bone marrow, brain, lymphoid tissue)"/>
</dbReference>
<dbReference type="MalaCards" id="FLT3"/>
<dbReference type="MIM" id="136351">
    <property type="type" value="gene"/>
</dbReference>
<dbReference type="MIM" id="601626">
    <property type="type" value="phenotype"/>
</dbReference>
<dbReference type="neXtProt" id="NX_P36888"/>
<dbReference type="OpenTargets" id="ENSG00000122025"/>
<dbReference type="Orphanet" id="98834">
    <property type="disease" value="Acute myeloblastic leukemia with maturation"/>
</dbReference>
<dbReference type="Orphanet" id="98833">
    <property type="disease" value="Acute myeloblastic leukemia without maturation"/>
</dbReference>
<dbReference type="Orphanet" id="98829">
    <property type="disease" value="Acute myeloid leukemia with abnormal bone marrow eosinophils inv(16)(p13q22) or t(16;16)(p13;q22)"/>
</dbReference>
<dbReference type="Orphanet" id="98832">
    <property type="disease" value="Acute myeloid leukemia with minimal differentiation"/>
</dbReference>
<dbReference type="Orphanet" id="102724">
    <property type="disease" value="Acute myeloid leukemia with t(8;21)(q22;q22) translocation"/>
</dbReference>
<dbReference type="Orphanet" id="585909">
    <property type="disease" value="B-lymphoblastic leukemia/lymphoma with t(9;22)(q34.1;q11.2)"/>
</dbReference>
<dbReference type="Orphanet" id="589534">
    <property type="disease" value="Mixed phenotype acute leukemia with t(9;22)(q34.1;q11.2)"/>
</dbReference>
<dbReference type="Orphanet" id="589595">
    <property type="disease" value="Mixed phenotype acute leukemia with t(v;11q23.3)"/>
</dbReference>
<dbReference type="Orphanet" id="99861">
    <property type="disease" value="Precursor T-cell acute lymphoblastic leukemia"/>
</dbReference>
<dbReference type="PharmGKB" id="PA28181"/>
<dbReference type="VEuPathDB" id="HostDB:ENSG00000122025"/>
<dbReference type="eggNOG" id="KOG0200">
    <property type="taxonomic scope" value="Eukaryota"/>
</dbReference>
<dbReference type="GeneTree" id="ENSGT00940000160575"/>
<dbReference type="HOGENOM" id="CLU_000288_49_1_1"/>
<dbReference type="InParanoid" id="P36888"/>
<dbReference type="OMA" id="FCDHKHQ"/>
<dbReference type="OrthoDB" id="6077854at2759"/>
<dbReference type="PAN-GO" id="P36888">
    <property type="GO annotations" value="9 GO annotations based on evolutionary models"/>
</dbReference>
<dbReference type="PhylomeDB" id="P36888"/>
<dbReference type="TreeFam" id="TF325768"/>
<dbReference type="BRENDA" id="2.7.10.1">
    <property type="organism ID" value="2681"/>
</dbReference>
<dbReference type="PathwayCommons" id="P36888"/>
<dbReference type="Reactome" id="R-HSA-109704">
    <property type="pathway name" value="PI3K Cascade"/>
</dbReference>
<dbReference type="Reactome" id="R-HSA-1257604">
    <property type="pathway name" value="PIP3 activates AKT signaling"/>
</dbReference>
<dbReference type="Reactome" id="R-HSA-2219530">
    <property type="pathway name" value="Constitutive Signaling by Aberrant PI3K in Cancer"/>
</dbReference>
<dbReference type="Reactome" id="R-HSA-5673001">
    <property type="pathway name" value="RAF/MAP kinase cascade"/>
</dbReference>
<dbReference type="Reactome" id="R-HSA-6811558">
    <property type="pathway name" value="PI5P, PP2A and IER3 Regulate PI3K/AKT Signaling"/>
</dbReference>
<dbReference type="Reactome" id="R-HSA-9607240">
    <property type="pathway name" value="FLT3 Signaling"/>
</dbReference>
<dbReference type="Reactome" id="R-HSA-9645135">
    <property type="pathway name" value="STAT5 Activation"/>
</dbReference>
<dbReference type="Reactome" id="R-HSA-9702509">
    <property type="pathway name" value="FLT3 mutants bind TKIs"/>
</dbReference>
<dbReference type="Reactome" id="R-HSA-9702518">
    <property type="pathway name" value="STAT5 activation downstream of FLT3 ITD mutants"/>
</dbReference>
<dbReference type="Reactome" id="R-HSA-9702569">
    <property type="pathway name" value="KW2449-resistant FLT3 mutants"/>
</dbReference>
<dbReference type="Reactome" id="R-HSA-9702577">
    <property type="pathway name" value="semaxanib-resistant FLT3 mutants"/>
</dbReference>
<dbReference type="Reactome" id="R-HSA-9702581">
    <property type="pathway name" value="crenolanib-resistant FLT3 mutants"/>
</dbReference>
<dbReference type="Reactome" id="R-HSA-9702590">
    <property type="pathway name" value="gilteritinib-resistant FLT3 mutants"/>
</dbReference>
<dbReference type="Reactome" id="R-HSA-9702596">
    <property type="pathway name" value="lestaurtinib-resistant FLT3 mutants"/>
</dbReference>
<dbReference type="Reactome" id="R-HSA-9702600">
    <property type="pathway name" value="midostaurin-resistant FLT3 mutants"/>
</dbReference>
<dbReference type="Reactome" id="R-HSA-9702605">
    <property type="pathway name" value="pexidartinib-resistant FLT3 mutants"/>
</dbReference>
<dbReference type="Reactome" id="R-HSA-9702614">
    <property type="pathway name" value="ponatinib-resistant FLT3 mutants"/>
</dbReference>
<dbReference type="Reactome" id="R-HSA-9702620">
    <property type="pathway name" value="quizartinib-resistant FLT3 mutants"/>
</dbReference>
<dbReference type="Reactome" id="R-HSA-9702624">
    <property type="pathway name" value="sorafenib-resistant FLT3 mutants"/>
</dbReference>
<dbReference type="Reactome" id="R-HSA-9702632">
    <property type="pathway name" value="sunitinib-resistant FLT3 mutants"/>
</dbReference>
<dbReference type="Reactome" id="R-HSA-9702636">
    <property type="pathway name" value="tandutinib-resistant FLT3 mutants"/>
</dbReference>
<dbReference type="Reactome" id="R-HSA-9702998">
    <property type="pathway name" value="linifanib-resistant FLT3 mutants"/>
</dbReference>
<dbReference type="Reactome" id="R-HSA-9703009">
    <property type="pathway name" value="tamatinib-resistant FLT3 mutants"/>
</dbReference>
<dbReference type="Reactome" id="R-HSA-9703648">
    <property type="pathway name" value="Signaling by FLT3 ITD and TKD mutants"/>
</dbReference>
<dbReference type="Reactome" id="R-HSA-9706369">
    <property type="pathway name" value="Negative regulation of FLT3"/>
</dbReference>
<dbReference type="Reactome" id="R-HSA-9706374">
    <property type="pathway name" value="FLT3 signaling through SRC family kinases"/>
</dbReference>
<dbReference type="Reactome" id="R-HSA-9706377">
    <property type="pathway name" value="FLT3 signaling by CBL mutants"/>
</dbReference>
<dbReference type="SignaLink" id="P36888"/>
<dbReference type="SIGNOR" id="P36888"/>
<dbReference type="BioGRID-ORCS" id="2322">
    <property type="hits" value="22 hits in 1197 CRISPR screens"/>
</dbReference>
<dbReference type="ChiTaRS" id="FLT3">
    <property type="organism name" value="human"/>
</dbReference>
<dbReference type="EvolutionaryTrace" id="P36888"/>
<dbReference type="GeneWiki" id="CD135"/>
<dbReference type="GenomeRNAi" id="2322"/>
<dbReference type="Pharos" id="P36888">
    <property type="development level" value="Tclin"/>
</dbReference>
<dbReference type="PRO" id="PR:P36888"/>
<dbReference type="Proteomes" id="UP000005640">
    <property type="component" value="Chromosome 13"/>
</dbReference>
<dbReference type="RNAct" id="P36888">
    <property type="molecule type" value="protein"/>
</dbReference>
<dbReference type="Bgee" id="ENSG00000122025">
    <property type="expression patterns" value="Expressed in male germ line stem cell (sensu Vertebrata) in testis and 104 other cell types or tissues"/>
</dbReference>
<dbReference type="ExpressionAtlas" id="P36888">
    <property type="expression patterns" value="baseline and differential"/>
</dbReference>
<dbReference type="GO" id="GO:0005783">
    <property type="term" value="C:endoplasmic reticulum"/>
    <property type="evidence" value="ECO:0000314"/>
    <property type="project" value="HPA"/>
</dbReference>
<dbReference type="GO" id="GO:0005788">
    <property type="term" value="C:endoplasmic reticulum lumen"/>
    <property type="evidence" value="ECO:0007669"/>
    <property type="project" value="UniProtKB-SubCell"/>
</dbReference>
<dbReference type="GO" id="GO:0010008">
    <property type="term" value="C:endosome membrane"/>
    <property type="evidence" value="ECO:0000304"/>
    <property type="project" value="Reactome"/>
</dbReference>
<dbReference type="GO" id="GO:0005886">
    <property type="term" value="C:plasma membrane"/>
    <property type="evidence" value="ECO:0000318"/>
    <property type="project" value="GO_Central"/>
</dbReference>
<dbReference type="GO" id="GO:0043235">
    <property type="term" value="C:receptor complex"/>
    <property type="evidence" value="ECO:0000318"/>
    <property type="project" value="GO_Central"/>
</dbReference>
<dbReference type="GO" id="GO:0005524">
    <property type="term" value="F:ATP binding"/>
    <property type="evidence" value="ECO:0007669"/>
    <property type="project" value="UniProtKB-KW"/>
</dbReference>
<dbReference type="GO" id="GO:0004896">
    <property type="term" value="F:cytokine receptor activity"/>
    <property type="evidence" value="ECO:0000250"/>
    <property type="project" value="UniProtKB"/>
</dbReference>
<dbReference type="GO" id="GO:0019838">
    <property type="term" value="F:growth factor binding"/>
    <property type="evidence" value="ECO:0000318"/>
    <property type="project" value="GO_Central"/>
</dbReference>
<dbReference type="GO" id="GO:0035259">
    <property type="term" value="F:nuclear glucocorticoid receptor binding"/>
    <property type="evidence" value="ECO:0007669"/>
    <property type="project" value="Ensembl"/>
</dbReference>
<dbReference type="GO" id="GO:0141038">
    <property type="term" value="F:phosphatidylinositol 3-kinase activator activity"/>
    <property type="evidence" value="ECO:0000304"/>
    <property type="project" value="UniProtKB"/>
</dbReference>
<dbReference type="GO" id="GO:0004713">
    <property type="term" value="F:protein tyrosine kinase activity"/>
    <property type="evidence" value="ECO:0000304"/>
    <property type="project" value="Reactome"/>
</dbReference>
<dbReference type="GO" id="GO:0044877">
    <property type="term" value="F:protein-containing complex binding"/>
    <property type="evidence" value="ECO:0007669"/>
    <property type="project" value="Ensembl"/>
</dbReference>
<dbReference type="GO" id="GO:0004714">
    <property type="term" value="F:transmembrane receptor protein tyrosine kinase activity"/>
    <property type="evidence" value="ECO:0000318"/>
    <property type="project" value="GO_Central"/>
</dbReference>
<dbReference type="GO" id="GO:0005021">
    <property type="term" value="F:vascular endothelial growth factor receptor activity"/>
    <property type="evidence" value="ECO:0000304"/>
    <property type="project" value="ProtInc"/>
</dbReference>
<dbReference type="GO" id="GO:0030183">
    <property type="term" value="P:B cell differentiation"/>
    <property type="evidence" value="ECO:0000250"/>
    <property type="project" value="UniProtKB"/>
</dbReference>
<dbReference type="GO" id="GO:0016477">
    <property type="term" value="P:cell migration"/>
    <property type="evidence" value="ECO:0000318"/>
    <property type="project" value="GO_Central"/>
</dbReference>
<dbReference type="GO" id="GO:0007169">
    <property type="term" value="P:cell surface receptor protein tyrosine kinase signaling pathway"/>
    <property type="evidence" value="ECO:0000318"/>
    <property type="project" value="GO_Central"/>
</dbReference>
<dbReference type="GO" id="GO:0071345">
    <property type="term" value="P:cellular response to cytokine stimulus"/>
    <property type="evidence" value="ECO:0000250"/>
    <property type="project" value="UniProtKB"/>
</dbReference>
<dbReference type="GO" id="GO:0071385">
    <property type="term" value="P:cellular response to glucocorticoid stimulus"/>
    <property type="evidence" value="ECO:0007669"/>
    <property type="project" value="Ensembl"/>
</dbReference>
<dbReference type="GO" id="GO:0035726">
    <property type="term" value="P:common myeloid progenitor cell proliferation"/>
    <property type="evidence" value="ECO:0000250"/>
    <property type="project" value="UniProtKB"/>
</dbReference>
<dbReference type="GO" id="GO:0019221">
    <property type="term" value="P:cytokine-mediated signaling pathway"/>
    <property type="evidence" value="ECO:0000250"/>
    <property type="project" value="UniProtKB"/>
</dbReference>
<dbReference type="GO" id="GO:0097028">
    <property type="term" value="P:dendritic cell differentiation"/>
    <property type="evidence" value="ECO:0000250"/>
    <property type="project" value="UniProtKB"/>
</dbReference>
<dbReference type="GO" id="GO:0030097">
    <property type="term" value="P:hemopoiesis"/>
    <property type="evidence" value="ECO:0000314"/>
    <property type="project" value="MGI"/>
</dbReference>
<dbReference type="GO" id="GO:0001776">
    <property type="term" value="P:leukocyte homeostasis"/>
    <property type="evidence" value="ECO:0000250"/>
    <property type="project" value="UniProtKB"/>
</dbReference>
<dbReference type="GO" id="GO:0097421">
    <property type="term" value="P:liver regeneration"/>
    <property type="evidence" value="ECO:0007669"/>
    <property type="project" value="Ensembl"/>
</dbReference>
<dbReference type="GO" id="GO:0046651">
    <property type="term" value="P:lymphocyte proliferation"/>
    <property type="evidence" value="ECO:0000250"/>
    <property type="project" value="UniProtKB"/>
</dbReference>
<dbReference type="GO" id="GO:0002318">
    <property type="term" value="P:myeloid progenitor cell differentiation"/>
    <property type="evidence" value="ECO:0000250"/>
    <property type="project" value="UniProtKB"/>
</dbReference>
<dbReference type="GO" id="GO:0018108">
    <property type="term" value="P:peptidyl-tyrosine phosphorylation"/>
    <property type="evidence" value="ECO:0000304"/>
    <property type="project" value="UniProtKB"/>
</dbReference>
<dbReference type="GO" id="GO:0008284">
    <property type="term" value="P:positive regulation of cell population proliferation"/>
    <property type="evidence" value="ECO:0000318"/>
    <property type="project" value="GO_Central"/>
</dbReference>
<dbReference type="GO" id="GO:0043406">
    <property type="term" value="P:positive regulation of MAP kinase activity"/>
    <property type="evidence" value="ECO:0000304"/>
    <property type="project" value="UniProtKB"/>
</dbReference>
<dbReference type="GO" id="GO:0043410">
    <property type="term" value="P:positive regulation of MAPK cascade"/>
    <property type="evidence" value="ECO:0000304"/>
    <property type="project" value="UniProtKB"/>
</dbReference>
<dbReference type="GO" id="GO:0051897">
    <property type="term" value="P:positive regulation of phosphatidylinositol 3-kinase/protein kinase B signal transduction"/>
    <property type="evidence" value="ECO:0000304"/>
    <property type="project" value="UniProtKB"/>
</dbReference>
<dbReference type="GO" id="GO:0042531">
    <property type="term" value="P:positive regulation of tyrosine phosphorylation of STAT protein"/>
    <property type="evidence" value="ECO:0000304"/>
    <property type="project" value="UniProtKB"/>
</dbReference>
<dbReference type="GO" id="GO:0002328">
    <property type="term" value="P:pro-B cell differentiation"/>
    <property type="evidence" value="ECO:0000250"/>
    <property type="project" value="UniProtKB"/>
</dbReference>
<dbReference type="GO" id="GO:0046777">
    <property type="term" value="P:protein autophosphorylation"/>
    <property type="evidence" value="ECO:0000304"/>
    <property type="project" value="UniProtKB"/>
</dbReference>
<dbReference type="GO" id="GO:0042981">
    <property type="term" value="P:regulation of apoptotic process"/>
    <property type="evidence" value="ECO:0000304"/>
    <property type="project" value="UniProtKB"/>
</dbReference>
<dbReference type="FunFam" id="2.60.40.10:FF:001159">
    <property type="entry name" value="Fms related tyrosine kinase 3"/>
    <property type="match status" value="1"/>
</dbReference>
<dbReference type="FunFam" id="1.10.510.10:FF:000426">
    <property type="entry name" value="Receptor-type tyrosine-protein kinase FLT3"/>
    <property type="match status" value="1"/>
</dbReference>
<dbReference type="FunFam" id="2.60.40.10:FF:000661">
    <property type="entry name" value="receptor-type tyrosine-protein kinase FLT3"/>
    <property type="match status" value="1"/>
</dbReference>
<dbReference type="FunFam" id="3.30.200.20:FF:000366">
    <property type="entry name" value="receptor-type tyrosine-protein kinase FLT3"/>
    <property type="match status" value="1"/>
</dbReference>
<dbReference type="Gene3D" id="2.60.40.10">
    <property type="entry name" value="Immunoglobulins"/>
    <property type="match status" value="2"/>
</dbReference>
<dbReference type="Gene3D" id="3.30.200.20">
    <property type="entry name" value="Phosphorylase Kinase, domain 1"/>
    <property type="match status" value="1"/>
</dbReference>
<dbReference type="Gene3D" id="1.10.510.10">
    <property type="entry name" value="Transferase(Phosphotransferase) domain 1"/>
    <property type="match status" value="1"/>
</dbReference>
<dbReference type="InterPro" id="IPR007110">
    <property type="entry name" value="Ig-like_dom"/>
</dbReference>
<dbReference type="InterPro" id="IPR036179">
    <property type="entry name" value="Ig-like_dom_sf"/>
</dbReference>
<dbReference type="InterPro" id="IPR013783">
    <property type="entry name" value="Ig-like_fold"/>
</dbReference>
<dbReference type="InterPro" id="IPR013151">
    <property type="entry name" value="Immunoglobulin_dom"/>
</dbReference>
<dbReference type="InterPro" id="IPR011009">
    <property type="entry name" value="Kinase-like_dom_sf"/>
</dbReference>
<dbReference type="InterPro" id="IPR000719">
    <property type="entry name" value="Prot_kinase_dom"/>
</dbReference>
<dbReference type="InterPro" id="IPR017441">
    <property type="entry name" value="Protein_kinase_ATP_BS"/>
</dbReference>
<dbReference type="InterPro" id="IPR050122">
    <property type="entry name" value="RTK"/>
</dbReference>
<dbReference type="InterPro" id="IPR001245">
    <property type="entry name" value="Ser-Thr/Tyr_kinase_cat_dom"/>
</dbReference>
<dbReference type="InterPro" id="IPR008266">
    <property type="entry name" value="Tyr_kinase_AS"/>
</dbReference>
<dbReference type="InterPro" id="IPR020635">
    <property type="entry name" value="Tyr_kinase_cat_dom"/>
</dbReference>
<dbReference type="InterPro" id="IPR001824">
    <property type="entry name" value="Tyr_kinase_rcpt_3_CS"/>
</dbReference>
<dbReference type="PANTHER" id="PTHR24416:SF356">
    <property type="entry name" value="RECEPTOR-TYPE TYROSINE-PROTEIN KINASE FLT3"/>
    <property type="match status" value="1"/>
</dbReference>
<dbReference type="PANTHER" id="PTHR24416">
    <property type="entry name" value="TYROSINE-PROTEIN KINASE RECEPTOR"/>
    <property type="match status" value="1"/>
</dbReference>
<dbReference type="Pfam" id="PF00047">
    <property type="entry name" value="ig"/>
    <property type="match status" value="1"/>
</dbReference>
<dbReference type="Pfam" id="PF07714">
    <property type="entry name" value="PK_Tyr_Ser-Thr"/>
    <property type="match status" value="1"/>
</dbReference>
<dbReference type="PIRSF" id="PIRSF000615">
    <property type="entry name" value="TyrPK_CSF1-R"/>
    <property type="match status" value="1"/>
</dbReference>
<dbReference type="SMART" id="SM00219">
    <property type="entry name" value="TyrKc"/>
    <property type="match status" value="1"/>
</dbReference>
<dbReference type="SUPFAM" id="SSF48726">
    <property type="entry name" value="Immunoglobulin"/>
    <property type="match status" value="1"/>
</dbReference>
<dbReference type="SUPFAM" id="SSF56112">
    <property type="entry name" value="Protein kinase-like (PK-like)"/>
    <property type="match status" value="1"/>
</dbReference>
<dbReference type="PROSITE" id="PS50835">
    <property type="entry name" value="IG_LIKE"/>
    <property type="match status" value="1"/>
</dbReference>
<dbReference type="PROSITE" id="PS00107">
    <property type="entry name" value="PROTEIN_KINASE_ATP"/>
    <property type="match status" value="1"/>
</dbReference>
<dbReference type="PROSITE" id="PS50011">
    <property type="entry name" value="PROTEIN_KINASE_DOM"/>
    <property type="match status" value="1"/>
</dbReference>
<dbReference type="PROSITE" id="PS00109">
    <property type="entry name" value="PROTEIN_KINASE_TYR"/>
    <property type="match status" value="1"/>
</dbReference>
<dbReference type="PROSITE" id="PS00240">
    <property type="entry name" value="RECEPTOR_TYR_KIN_III"/>
    <property type="match status" value="1"/>
</dbReference>
<gene>
    <name type="primary">FLT3</name>
    <name type="synonym">CD135</name>
    <name type="synonym">FLK2</name>
    <name type="synonym">STK1</name>
</gene>
<comment type="function">
    <text evidence="6 7 10 14 15 19 22 24 25 27 29">Tyrosine-protein kinase that acts as a cell-surface receptor for the cytokine FLT3LG and regulates differentiation, proliferation and survival of hematopoietic progenitor cells and of dendritic cells. Promotes phosphorylation of SHC1 and AKT1, and activation of the downstream effector MTOR. Promotes activation of RAS signaling and phosphorylation of downstream kinases, including MAPK1/ERK2 and/or MAPK3/ERK1. Promotes phosphorylation of FES, FER, PTPN6/SHP, PTPN11/SHP-2, PLCG1, and STAT5A and/or STAT5B. Activation of wild-type FLT3 causes only marginal activation of STAT5A or STAT5B. Mutations that cause constitutive kinase activity promote cell proliferation and resistance to apoptosis via the activation of multiple signaling pathways.</text>
</comment>
<comment type="catalytic activity">
    <reaction evidence="5 13">
        <text>L-tyrosyl-[protein] + ATP = O-phospho-L-tyrosyl-[protein] + ADP + H(+)</text>
        <dbReference type="Rhea" id="RHEA:10596"/>
        <dbReference type="Rhea" id="RHEA-COMP:10136"/>
        <dbReference type="Rhea" id="RHEA-COMP:20101"/>
        <dbReference type="ChEBI" id="CHEBI:15378"/>
        <dbReference type="ChEBI" id="CHEBI:30616"/>
        <dbReference type="ChEBI" id="CHEBI:46858"/>
        <dbReference type="ChEBI" id="CHEBI:61978"/>
        <dbReference type="ChEBI" id="CHEBI:456216"/>
        <dbReference type="EC" id="2.7.10.1"/>
    </reaction>
</comment>
<comment type="activity regulation">
    <text evidence="11 27">Present in an inactive conformation in the absence of bound ligand. FLT3LG binding leads to dimerization and activation by autophosphorylation.</text>
</comment>
<comment type="subunit">
    <text evidence="1 6 16 22 25 26 33">Monomer in the absence of bound FLT3LG. Homodimer in the presence of bound FLT3LG. Interacts with FIZ1 following ligand activation (By similarity). Interacts with FES, FER, LYN, FGR, HCK, SRC and GRB2. Interacts with PTPRJ/DEP-1 and PTPN11/SHP2. Interacts with RNF115 and RNF126 (By similarity).</text>
</comment>
<comment type="subunit">
    <text evidence="28">(Microbial infection) Interacts with human cytomegalovirus protein UL7.</text>
</comment>
<comment type="interaction">
    <interactant intactId="EBI-3946257">
        <id>P36888</id>
    </interactant>
    <interactant intactId="EBI-375543">
        <id>P00519</id>
        <label>ABL1</label>
    </interactant>
    <organismsDiffer>false</organismsDiffer>
    <experiments>2</experiments>
</comment>
<comment type="interaction">
    <interactant intactId="EBI-3946257">
        <id>P36888</id>
    </interactant>
    <interactant intactId="EBI-1102694">
        <id>P42684</id>
        <label>ABL2</label>
    </interactant>
    <organismsDiffer>false</organismsDiffer>
    <experiments>3</experiments>
</comment>
<comment type="interaction">
    <interactant intactId="EBI-3946257">
        <id>P36888</id>
    </interactant>
    <interactant intactId="EBI-886">
        <id>P46108</id>
        <label>CRK</label>
    </interactant>
    <organismsDiffer>false</organismsDiffer>
    <experiments>2</experiments>
</comment>
<comment type="interaction">
    <interactant intactId="EBI-3946257">
        <id>P36888</id>
    </interactant>
    <interactant intactId="EBI-910">
        <id>P46109</id>
        <label>CRKL</label>
    </interactant>
    <organismsDiffer>false</organismsDiffer>
    <experiments>2</experiments>
</comment>
<comment type="interaction">
    <interactant intactId="EBI-3946257">
        <id>P36888</id>
    </interactant>
    <interactant intactId="EBI-515315">
        <id>P06241</id>
        <label>FYN</label>
    </interactant>
    <organismsDiffer>false</organismsDiffer>
    <experiments>2</experiments>
</comment>
<comment type="interaction">
    <interactant intactId="EBI-3946257">
        <id>P36888</id>
    </interactant>
    <interactant intactId="EBI-80275">
        <id>Q13322</id>
        <label>GRB10</label>
    </interactant>
    <organismsDiffer>false</organismsDiffer>
    <experiments>6</experiments>
</comment>
<comment type="interaction">
    <interactant intactId="EBI-3946257">
        <id>P36888</id>
    </interactant>
    <interactant intactId="EBI-81279">
        <id>Q9Y6K9</id>
        <label>IKBKG</label>
    </interactant>
    <organismsDiffer>false</organismsDiffer>
    <experiments>2</experiments>
</comment>
<comment type="interaction">
    <interactant intactId="EBI-3946257">
        <id>P36888</id>
    </interactant>
    <interactant intactId="EBI-1348">
        <id>P06239</id>
        <label>LCK</label>
    </interactant>
    <organismsDiffer>false</organismsDiffer>
    <experiments>2</experiments>
</comment>
<comment type="interaction">
    <interactant intactId="EBI-3946257">
        <id>P36888</id>
    </interactant>
    <interactant intactId="EBI-79464">
        <id>P27986</id>
        <label>PIK3R1</label>
    </interactant>
    <organismsDiffer>false</organismsDiffer>
    <experiments>2</experiments>
</comment>
<comment type="interaction">
    <interactant intactId="EBI-3946257">
        <id>P36888</id>
    </interactant>
    <interactant intactId="EBI-1026476">
        <id>P20936</id>
        <label>RASA1</label>
    </interactant>
    <organismsDiffer>false</organismsDiffer>
    <experiments>2</experiments>
</comment>
<comment type="interaction">
    <interactant intactId="EBI-3946257">
        <id>P36888</id>
    </interactant>
    <interactant intactId="EBI-78302">
        <id>P43405</id>
        <label>SYK</label>
    </interactant>
    <organismsDiffer>false</organismsDiffer>
    <experiments>22</experiments>
</comment>
<comment type="interaction">
    <interactant intactId="EBI-3946257">
        <id>P36888</id>
    </interactant>
    <interactant intactId="EBI-20766300">
        <id>Q8R4L0</id>
        <label>Sla2</label>
    </interactant>
    <organismsDiffer>true</organismsDiffer>
    <experiments>14</experiments>
</comment>
<comment type="subcellular location">
    <subcellularLocation>
        <location>Membrane</location>
        <topology>Single-pass type I membrane protein</topology>
    </subcellularLocation>
    <subcellularLocation>
        <location>Endoplasmic reticulum lumen</location>
    </subcellularLocation>
    <text>Constitutively activated mutant forms with internal tandem duplications are less efficiently transported to the cell surface and a significant proportion is retained in an immature form in the endoplasmic reticulum lumen. The activated kinase is rapidly targeted for degradation.</text>
</comment>
<comment type="alternative products">
    <event type="alternative splicing"/>
    <isoform>
        <id>P36888-1</id>
        <name>1</name>
        <sequence type="displayed"/>
    </isoform>
    <isoform>
        <id>P36888-2</id>
        <name>2</name>
        <sequence type="described" ref="VSP_041796"/>
    </isoform>
</comment>
<comment type="tissue specificity">
    <text evidence="19 29 30 31">Detected in bone marrow, in hematopoietic stem cells, in myeloid progenitor cells and in granulocyte/macrophage progenitor cells (at protein level). Detected in bone marrow, liver, thymus, spleen and lymph node, and at low levels in kidney and pancreas. Highly expressed in T-cell leukemia.</text>
</comment>
<comment type="domain">
    <text>The juxtamembrane autoregulatory region is important for normal regulation of the kinase activity and for maintaining the kinase in an inactive state in the absence of bound ligand. Upon tyrosine phosphorylation, it mediates interaction with the SH2 domains of numerous signaling partners. In-frame internal tandem duplications (ITDs) result in constitutive activation of the kinase. The activity of the mutant kinase can be stimulated further by FLT3LG binding.</text>
</comment>
<comment type="PTM">
    <text evidence="13 25 26">N-glycosylated, contains complex N-glycans with sialic acid.</text>
</comment>
<comment type="PTM">
    <text>Autophosphorylated on several tyrosine residues in response to FLT3LG binding. FLT3LG binding also increases phosphorylation of mutant kinases that are constitutively activated. Dephosphorylated by PTPRJ/DEP-1, PTPN1, PTPN6/SHP-1, and to a lesser degree by PTPN12. Dephosphorylation is important for export from the endoplasmic reticulum and location at the cell membrane.</text>
</comment>
<comment type="PTM">
    <text evidence="23 25">Rapidly ubiquitinated by UBE2L6 and the E3 ubiquitin-protein ligase SIAH1 after autophosphorylation, leading to its proteasomal degradation.</text>
</comment>
<comment type="disease" evidence="7 8 9 10 14 18 32 33">
    <disease id="DI-01171">
        <name>Leukemia, acute myelogenous</name>
        <acronym>AML</acronym>
        <description>A subtype of acute leukemia, a cancer of the white blood cells. AML is a malignant disease of bone marrow characterized by maturational arrest of hematopoietic precursors at an early stage of development. Clonal expansion of myeloid blasts occurs in bone marrow, blood, and other tissue. Myelogenous leukemias develop from changes in cells that normally produce neutrophils, basophils, eosinophils and monocytes.</description>
        <dbReference type="MIM" id="601626"/>
    </disease>
    <text>The gene represented in this entry may be involved in disease pathogenesis. Somatic mutations that lead to constitutive activation of FLT3 are frequent in AML patients. These mutations fall into two classes, the most common being in-frame internal tandem duplications of variable length in the juxtamembrane region that disrupt the normal regulation of the kinase activity. Likewise, point mutations in the activation loop of the kinase domain can result in a constitutively activated kinase.</text>
</comment>
<comment type="miscellaneous">
    <text>Can be used as diagnostic tool to establish the exact cause of acute myeloid leukemia, and to determine the optimal therapy.</text>
</comment>
<comment type="similarity">
    <text evidence="4">Belongs to the protein kinase superfamily. Tyr protein kinase family. CSF-1/PDGF receptor subfamily.</text>
</comment>
<comment type="online information" name="Atlas of Genetics and Cytogenetics in Oncology and Haematology">
    <link uri="https://atlasgeneticsoncology.org/gene/144/FLT3"/>
</comment>
<reference key="1">
    <citation type="journal article" date="1994" name="Proc. Natl. Acad. Sci. U.S.A.">
        <title>STK-1, the human homolog of Flk-2/Flt-3, is selectively expressed in CD34+ human bone marrow cells and is involved in the proliferation of early progenitor/stem cells.</title>
        <authorList>
            <person name="Small D."/>
            <person name="Levenstein M."/>
            <person name="Kim E."/>
            <person name="Carow C."/>
            <person name="Amin S."/>
            <person name="Rockwell P."/>
            <person name="Witte L."/>
            <person name="Burrow C."/>
            <person name="Ratajczak M.Z."/>
            <person name="Gewirtz A.M."/>
            <person name="Civin C.I."/>
        </authorList>
    </citation>
    <scope>NUCLEOTIDE SEQUENCE [MRNA] (ISOFORM 1)</scope>
    <scope>FUNCTION</scope>
    <scope>TISSUE SPECIFICITY</scope>
    <source>
        <tissue>Bone marrow</tissue>
    </source>
</reference>
<reference key="2">
    <citation type="journal article" date="1993" name="Blood">
        <title>Human FLT3/FLK2 gene: cDNA cloning and expression in hematopoietic cells.</title>
        <authorList>
            <person name="Rosnet O."/>
            <person name="Schiff C."/>
            <person name="Pebusque M.J."/>
            <person name="Marchetto S."/>
            <person name="Tonnelle C."/>
            <person name="Toiron Y."/>
            <person name="Birg F."/>
            <person name="Birnbaum D."/>
        </authorList>
    </citation>
    <scope>NUCLEOTIDE SEQUENCE [MRNA] (ISOFORM 1)</scope>
    <scope>TISSUE SPECIFICITY</scope>
    <scope>VARIANT MET-227</scope>
    <source>
        <tissue>Lymphocyte</tissue>
    </source>
</reference>
<reference key="3">
    <citation type="journal article" date="2004" name="Nature">
        <title>The DNA sequence and analysis of human chromosome 13.</title>
        <authorList>
            <person name="Dunham A."/>
            <person name="Matthews L.H."/>
            <person name="Burton J."/>
            <person name="Ashurst J.L."/>
            <person name="Howe K.L."/>
            <person name="Ashcroft K.J."/>
            <person name="Beare D.M."/>
            <person name="Burford D.C."/>
            <person name="Hunt S.E."/>
            <person name="Griffiths-Jones S."/>
            <person name="Jones M.C."/>
            <person name="Keenan S.J."/>
            <person name="Oliver K."/>
            <person name="Scott C.E."/>
            <person name="Ainscough R."/>
            <person name="Almeida J.P."/>
            <person name="Ambrose K.D."/>
            <person name="Andrews D.T."/>
            <person name="Ashwell R.I.S."/>
            <person name="Babbage A.K."/>
            <person name="Bagguley C.L."/>
            <person name="Bailey J."/>
            <person name="Bannerjee R."/>
            <person name="Barlow K.F."/>
            <person name="Bates K."/>
            <person name="Beasley H."/>
            <person name="Bird C.P."/>
            <person name="Bray-Allen S."/>
            <person name="Brown A.J."/>
            <person name="Brown J.Y."/>
            <person name="Burrill W."/>
            <person name="Carder C."/>
            <person name="Carter N.P."/>
            <person name="Chapman J.C."/>
            <person name="Clamp M.E."/>
            <person name="Clark S.Y."/>
            <person name="Clarke G."/>
            <person name="Clee C.M."/>
            <person name="Clegg S.C."/>
            <person name="Cobley V."/>
            <person name="Collins J.E."/>
            <person name="Corby N."/>
            <person name="Coville G.J."/>
            <person name="Deloukas P."/>
            <person name="Dhami P."/>
            <person name="Dunham I."/>
            <person name="Dunn M."/>
            <person name="Earthrowl M.E."/>
            <person name="Ellington A.G."/>
            <person name="Faulkner L."/>
            <person name="Frankish A.G."/>
            <person name="Frankland J."/>
            <person name="French L."/>
            <person name="Garner P."/>
            <person name="Garnett J."/>
            <person name="Gilbert J.G.R."/>
            <person name="Gilson C.J."/>
            <person name="Ghori J."/>
            <person name="Grafham D.V."/>
            <person name="Gribble S.M."/>
            <person name="Griffiths C."/>
            <person name="Hall R.E."/>
            <person name="Hammond S."/>
            <person name="Harley J.L."/>
            <person name="Hart E.A."/>
            <person name="Heath P.D."/>
            <person name="Howden P.J."/>
            <person name="Huckle E.J."/>
            <person name="Hunt P.J."/>
            <person name="Hunt A.R."/>
            <person name="Johnson C."/>
            <person name="Johnson D."/>
            <person name="Kay M."/>
            <person name="Kimberley A.M."/>
            <person name="King A."/>
            <person name="Laird G.K."/>
            <person name="Langford C.J."/>
            <person name="Lawlor S."/>
            <person name="Leongamornlert D.A."/>
            <person name="Lloyd D.M."/>
            <person name="Lloyd C."/>
            <person name="Loveland J.E."/>
            <person name="Lovell J."/>
            <person name="Martin S."/>
            <person name="Mashreghi-Mohammadi M."/>
            <person name="McLaren S.J."/>
            <person name="McMurray A."/>
            <person name="Milne S."/>
            <person name="Moore M.J.F."/>
            <person name="Nickerson T."/>
            <person name="Palmer S.A."/>
            <person name="Pearce A.V."/>
            <person name="Peck A.I."/>
            <person name="Pelan S."/>
            <person name="Phillimore B."/>
            <person name="Porter K.M."/>
            <person name="Rice C.M."/>
            <person name="Searle S."/>
            <person name="Sehra H.K."/>
            <person name="Shownkeen R."/>
            <person name="Skuce C.D."/>
            <person name="Smith M."/>
            <person name="Steward C.A."/>
            <person name="Sycamore N."/>
            <person name="Tester J."/>
            <person name="Thomas D.W."/>
            <person name="Tracey A."/>
            <person name="Tromans A."/>
            <person name="Tubby B."/>
            <person name="Wall M."/>
            <person name="Wallis J.M."/>
            <person name="West A.P."/>
            <person name="Whitehead S.L."/>
            <person name="Willey D.L."/>
            <person name="Wilming L."/>
            <person name="Wray P.W."/>
            <person name="Wright M.W."/>
            <person name="Young L."/>
            <person name="Coulson A."/>
            <person name="Durbin R.M."/>
            <person name="Hubbard T."/>
            <person name="Sulston J.E."/>
            <person name="Beck S."/>
            <person name="Bentley D.R."/>
            <person name="Rogers J."/>
            <person name="Ross M.T."/>
        </authorList>
    </citation>
    <scope>NUCLEOTIDE SEQUENCE [LARGE SCALE GENOMIC DNA]</scope>
</reference>
<reference key="4">
    <citation type="submission" date="2005-07" db="EMBL/GenBank/DDBJ databases">
        <authorList>
            <person name="Mural R.J."/>
            <person name="Istrail S."/>
            <person name="Sutton G.G."/>
            <person name="Florea L."/>
            <person name="Halpern A.L."/>
            <person name="Mobarry C.M."/>
            <person name="Lippert R."/>
            <person name="Walenz B."/>
            <person name="Shatkay H."/>
            <person name="Dew I."/>
            <person name="Miller J.R."/>
            <person name="Flanigan M.J."/>
            <person name="Edwards N.J."/>
            <person name="Bolanos R."/>
            <person name="Fasulo D."/>
            <person name="Halldorsson B.V."/>
            <person name="Hannenhalli S."/>
            <person name="Turner R."/>
            <person name="Yooseph S."/>
            <person name="Lu F."/>
            <person name="Nusskern D.R."/>
            <person name="Shue B.C."/>
            <person name="Zheng X.H."/>
            <person name="Zhong F."/>
            <person name="Delcher A.L."/>
            <person name="Huson D.H."/>
            <person name="Kravitz S.A."/>
            <person name="Mouchard L."/>
            <person name="Reinert K."/>
            <person name="Remington K.A."/>
            <person name="Clark A.G."/>
            <person name="Waterman M.S."/>
            <person name="Eichler E.E."/>
            <person name="Adams M.D."/>
            <person name="Hunkapiller M.W."/>
            <person name="Myers E.W."/>
            <person name="Venter J.C."/>
        </authorList>
    </citation>
    <scope>NUCLEOTIDE SEQUENCE [LARGE SCALE GENOMIC DNA]</scope>
    <scope>VARIANT MET-227</scope>
</reference>
<reference key="5">
    <citation type="journal article" date="2004" name="Genome Res.">
        <title>The status, quality, and expansion of the NIH full-length cDNA project: the Mammalian Gene Collection (MGC).</title>
        <authorList>
            <consortium name="The MGC Project Team"/>
        </authorList>
    </citation>
    <scope>NUCLEOTIDE SEQUENCE [LARGE SCALE MRNA] (ISOFORMS 1 AND 2)</scope>
    <scope>VARIANT MET-227</scope>
</reference>
<reference key="6">
    <citation type="journal article" date="1991" name="Genomics">
        <title>Isolation and chromosomal localization of a novel FMS-like tyrosine kinase gene.</title>
        <authorList>
            <person name="Rosnet O."/>
            <person name="Mattei M.-G."/>
            <person name="Marchetto S."/>
            <person name="Birnbaum D."/>
        </authorList>
    </citation>
    <scope>NUCLEOTIDE SEQUENCE [MRNA] OF 783-942 (ISOFORM 1)</scope>
    <source>
        <tissue>Testis</tissue>
    </source>
</reference>
<reference key="7">
    <citation type="journal article" date="1996" name="Leukemia">
        <title>Human FLT3/FLK2 receptor tyrosine kinase is expressed at the surface of normal and malignant hematopoietic cells.</title>
        <authorList>
            <person name="Rosnet O."/>
            <person name="Buhring H.J."/>
            <person name="Marchetto S."/>
            <person name="Rappold I."/>
            <person name="Lavagna C."/>
            <person name="Sainty D."/>
            <person name="Arnoulet C."/>
            <person name="Chabannon C."/>
            <person name="Kanz L."/>
            <person name="Hannum C."/>
            <person name="Birnbaum D."/>
        </authorList>
    </citation>
    <scope>TISSUE SPECIFICITY</scope>
    <scope>SUBCELLULAR LOCATION</scope>
</reference>
<reference key="8">
    <citation type="journal article" date="1996" name="Leukemia">
        <title>Internal tandem duplication of the flt3 gene found in acute myeloid leukemia.</title>
        <authorList>
            <person name="Nakao M."/>
            <person name="Yokota S."/>
            <person name="Iwai T."/>
            <person name="Kaneko H."/>
            <person name="Horiike S."/>
            <person name="Kashima K."/>
            <person name="Sonoda Y."/>
            <person name="Fujimoto T."/>
            <person name="Misawa S."/>
        </authorList>
    </citation>
    <scope>INVOLVEMENT IN AML</scope>
</reference>
<reference key="9">
    <citation type="journal article" date="1998" name="Leukemia">
        <title>Internal tandem duplication of the FLT3 gene is a novel modality of elongation mutation which causes constitutive activation of the product.</title>
        <authorList>
            <person name="Kiyoi H."/>
            <person name="Towatari M."/>
            <person name="Yokota S."/>
            <person name="Hamaguchi M."/>
            <person name="Ohno R."/>
            <person name="Saito H."/>
            <person name="Naoe T."/>
        </authorList>
    </citation>
    <scope>INVOLVEMENT IN AML</scope>
    <scope>SUBUNIT</scope>
    <scope>PHOSPHORYLATION</scope>
    <scope>MUTAGENESIS OF TYR-589 AND TYR-591</scope>
</reference>
<reference key="10">
    <citation type="journal article" date="1999" name="J. Leukoc. Biol.">
        <title>Flt3 signaling involves tyrosyl-phosphorylation of SHP-2 and SHIP and their association with Grb2 and Shc in Baf3/Flt3 cells.</title>
        <authorList>
            <person name="Zhang S."/>
            <person name="Mantel C."/>
            <person name="Broxmeyer H.E."/>
        </authorList>
    </citation>
    <scope>FUNCTION IN PROMOTING PHOSPHORYLATION OF SHC1; PTPN6/SHP; PTPN11/SHP-2; MAPK1/ERK2; MAPK3/ERK1</scope>
    <scope>AUTOPHOSPHORYLATION</scope>
    <scope>INTERACTION WITH GRB2</scope>
</reference>
<reference key="11">
    <citation type="journal article" date="2000" name="Blood">
        <title>Flt3 mutations from patients with acute myeloid leukemia induce transformation of 32D cells mediated by the Ras and STAT5 pathways.</title>
        <authorList>
            <person name="Mizuki M."/>
            <person name="Fenski R."/>
            <person name="Halfter H."/>
            <person name="Matsumura I."/>
            <person name="Schmidt R."/>
            <person name="Muller C."/>
            <person name="Gruning W."/>
            <person name="Kratz-Albers K."/>
            <person name="Serve S."/>
            <person name="Steur C."/>
            <person name="Buchner T."/>
            <person name="Kienast J."/>
            <person name="Kanakura Y."/>
            <person name="Berdel W.E."/>
            <person name="Serve H."/>
        </authorList>
    </citation>
    <scope>FUNCTION IN ACTIVATION OF AKT1; MAPK1/ERK2; MAPK3/ERK1; STAT5A AND STAT5B</scope>
    <scope>PHOSPHORYLATION</scope>
    <scope>FUNCTION IN ACTIVATION OF THE RAS PATHWAY</scope>
    <scope>INVOLVEMENT IN AML</scope>
</reference>
<reference key="12">
    <citation type="journal article" date="2005" name="Cancer Res.">
        <title>Constitutive activation of Akt by Flt3 internal tandem duplications is necessary for increased survival, proliferation, and myeloid transformation.</title>
        <authorList>
            <person name="Brandts C.H."/>
            <person name="Sargin B."/>
            <person name="Rode M."/>
            <person name="Biermann C."/>
            <person name="Lindtner B."/>
            <person name="Schwable J."/>
            <person name="Buerger H."/>
            <person name="Muller-Tidow C."/>
            <person name="Choudhary C."/>
            <person name="McMahon M."/>
            <person name="Berdel W.E."/>
            <person name="Serve H."/>
        </authorList>
    </citation>
    <scope>FUNCTION IN ACTIVATION OF AKT1</scope>
    <scope>INVOLVEMENT IN AML</scope>
</reference>
<reference key="13">
    <citation type="journal article" date="2005" name="Mol. Cell. Biol.">
        <title>Tyrosine phosphorylation regulates maturation of receptor tyrosine kinases.</title>
        <authorList>
            <person name="Schmidt-Arras D.E."/>
            <person name="Bohmer A."/>
            <person name="Markova B."/>
            <person name="Choudhary C."/>
            <person name="Serve H."/>
            <person name="Bohmer F.D."/>
        </authorList>
    </citation>
    <scope>SUBCELLULAR LOCATION</scope>
    <scope>CATALYTIC ACTIVITY</scope>
    <scope>PHOSPHORYLATION AT TYR-591</scope>
    <scope>DEPHOSPHORYLATION BY PTPN1; PTPN6/SHP-1 AND PTPN12</scope>
    <scope>PROTEASOMAL DEGRADATION</scope>
    <scope>GLYCOSYLATION</scope>
    <scope>MUTAGENESIS OF LYS-644</scope>
</reference>
<reference key="14">
    <citation type="journal article" date="2006" name="Blood">
        <title>Roles of tyrosine 589 and 591 in STAT5 activation and transformation mediated by FLT3-ITD.</title>
        <authorList>
            <person name="Rocnik J.L."/>
            <person name="Okabe R."/>
            <person name="Yu J.C."/>
            <person name="Lee B.H."/>
            <person name="Giese N."/>
            <person name="Schenkein D.P."/>
            <person name="Gilliland D.G."/>
        </authorList>
    </citation>
    <scope>FUNCTION IN ACTIVATION OF STAT5A AND/OR STAT5B</scope>
    <scope>PHOSPHORYLATION AT TYR-591; TYR-726; TYR-842; TYR-955 AND TYR-969</scope>
    <scope>IDENTIFICATION BY MASS SPECTROMETRY</scope>
    <scope>MUTAGENESIS OF TYR-589 AND TYR-591</scope>
</reference>
<reference key="15">
    <citation type="journal article" date="2006" name="Blood">
        <title>Identification of Y589 and Y599 in the juxtamembrane domain of Flt3 as ligand-induced autophosphorylation sites involved in binding of Src family kinases and the protein tyrosine phosphatase SHP2.</title>
        <authorList>
            <person name="Heiss E."/>
            <person name="Masson K."/>
            <person name="Sundberg C."/>
            <person name="Pedersen M."/>
            <person name="Sun J."/>
            <person name="Bengtsson S."/>
            <person name="Ronnstrand L."/>
        </authorList>
    </citation>
    <scope>INTERACTION WITH PTPN11/SHP2; LYN; FGR; HCK AND SRC</scope>
    <scope>AUTOPHOSPHORYLATION</scope>
    <scope>MUTAGENESIS OF TYR-589 AND TYR-599</scope>
    <scope>PHOSPHORYLATION AT TYR-572; SER-574; TYR-589; TYR-591 AND TYR-599</scope>
</reference>
<reference key="16">
    <citation type="journal article" date="2008" name="Blood">
        <title>Structural and numerical variation of FLT3/ITD in pediatric AML.</title>
        <authorList>
            <person name="Meshinchi S."/>
            <person name="Stirewalt D.L."/>
            <person name="Alonzo T.A."/>
            <person name="Boggon T.J."/>
            <person name="Gerbing R.B."/>
            <person name="Rocnik J.L."/>
            <person name="Lange B.J."/>
            <person name="Gilliland D.G."/>
            <person name="Radich J.P."/>
        </authorList>
    </citation>
    <scope>REGION INVOLVED IN REGULATION OF KINASE ACTIVITY</scope>
    <scope>AUTOREGULATORY DOMAIN</scope>
    <scope>INVOLVEMENT IN AML</scope>
</reference>
<reference key="17">
    <citation type="journal article" date="2008" name="J. Immunol.">
        <title>Human Flt3 is expressed at the hematopoietic stem cell and the granulocyte/macrophage progenitor stages to maintain cell survival.</title>
        <authorList>
            <person name="Kikushige Y."/>
            <person name="Yoshimoto G."/>
            <person name="Miyamoto T."/>
            <person name="Iino T."/>
            <person name="Mori Y."/>
            <person name="Iwasaki H."/>
            <person name="Niiro H."/>
            <person name="Takenaka K."/>
            <person name="Nagafuji K."/>
            <person name="Harada M."/>
            <person name="Ishikawa F."/>
            <person name="Akashi K."/>
        </authorList>
    </citation>
    <scope>FUNCTION</scope>
    <scope>SUBCELLULAR LOCATION</scope>
    <scope>TISSUE SPECIFICITY</scope>
</reference>
<reference key="18">
    <citation type="journal article" date="2009" name="Exp. Hematol.">
        <title>Oncogenic Flt3 receptors display different specificity and kinetics of autophosphorylation.</title>
        <authorList>
            <person name="Razumovskaya E."/>
            <person name="Masson K."/>
            <person name="Khan R."/>
            <person name="Bengtsson S."/>
            <person name="Ronnstrand L."/>
        </authorList>
    </citation>
    <scope>PHOSPHORYLATION AT TYR-589; TYR-591; TYR-599; TYR-726; TYR-768; TYR-793; TYR-842 AND TYR-955</scope>
</reference>
<reference key="19">
    <citation type="journal article" date="2009" name="Mol. Cell. Proteomics">
        <title>Large-scale proteomics analysis of the human kinome.</title>
        <authorList>
            <person name="Oppermann F.S."/>
            <person name="Gnad F."/>
            <person name="Olsen J.V."/>
            <person name="Hornberger R."/>
            <person name="Greff Z."/>
            <person name="Keri G."/>
            <person name="Mann M."/>
            <person name="Daub H."/>
        </authorList>
    </citation>
    <scope>PHOSPHORYLATION [LARGE SCALE ANALYSIS] AT SER-759 AND SER-993</scope>
    <scope>IDENTIFICATION BY MASS SPECTROMETRY [LARGE SCALE ANALYSIS]</scope>
</reference>
<reference key="20">
    <citation type="journal article" date="2010" name="Leukemia">
        <title>FES kinases are required for oncogenic FLT3 signaling.</title>
        <authorList>
            <person name="Voisset E."/>
            <person name="Lopez S."/>
            <person name="Chaix A."/>
            <person name="Georges C."/>
            <person name="Hanssens K."/>
            <person name="Prebet T."/>
            <person name="Dubreuil P."/>
            <person name="De Sepulveda P."/>
        </authorList>
    </citation>
    <scope>FUNCTION IN ACTIVATION OF FES AND FER</scope>
    <scope>INTERACTION WITH FES AND FER</scope>
</reference>
<reference key="21">
    <citation type="journal article" date="2010" name="Leukemia">
        <title>Ubiquitin conjugase UBCH8 targets active FMS-like tyrosine kinase 3 for proteasomal degradation.</title>
        <authorList>
            <person name="Buchwald M."/>
            <person name="Pietschmann K."/>
            <person name="Muller J.P."/>
            <person name="Bohmer F.D."/>
            <person name="Heinzel T."/>
            <person name="Kramer O.H."/>
        </authorList>
    </citation>
    <scope>UBIQUITINATION</scope>
</reference>
<reference key="22">
    <citation type="journal article" date="2010" name="Mol. Cancer">
        <title>mTOR signaling is activated by FLT3 kinase and promotes survival of FLT3-mutated acute myeloid leukemia cells.</title>
        <authorList>
            <person name="Chen W."/>
            <person name="Drakos E."/>
            <person name="Grammatikakis I."/>
            <person name="Schlette E.J."/>
            <person name="Li J."/>
            <person name="Leventaki V."/>
            <person name="Staikou-Drakopoulou E."/>
            <person name="Patsouris E."/>
            <person name="Panayiotidis P."/>
            <person name="Medeiros L.J."/>
            <person name="Rassidakis G.Z."/>
        </authorList>
    </citation>
    <scope>FUNCTION</scope>
</reference>
<reference key="23">
    <citation type="journal article" date="2011" name="J. Biol. Chem.">
        <title>Protein-tyrosine phosphatase DEP-1 controls receptor tyrosine kinase FLT3 signaling.</title>
        <authorList>
            <person name="Arora D."/>
            <person name="Stopp S."/>
            <person name="Bohmer S.A."/>
            <person name="Schons J."/>
            <person name="Godfrey R."/>
            <person name="Masson K."/>
            <person name="Razumovskaya E."/>
            <person name="Ronnstrand L."/>
            <person name="Tanzer S."/>
            <person name="Bauer R."/>
            <person name="Bohmer F.D."/>
            <person name="Muller J.P."/>
        </authorList>
    </citation>
    <scope>INTERACTION WITH PTPRJ/DEP1</scope>
    <scope>FUNCTION IN ACTIVATION OF MAPK1/ERK2; MAPK3/ERK1; PLCG1; STAT5A AND/OR STAT5B</scope>
    <scope>GLYCOSYLATION</scope>
    <scope>UBIQUITINATION</scope>
    <scope>PHOSPHORYLATION AT TYR-572; TYR-589; TYR-591; TYR-599; TYR-768; TYR-793; TYR-842 AND TYR-955</scope>
</reference>
<reference key="24">
    <citation type="journal article" date="2011" name="Oncogene">
        <title>Further activation of FLT3 mutants by FLT3 ligand.</title>
        <authorList>
            <person name="Zheng R."/>
            <person name="Bailey E."/>
            <person name="Nguyen B."/>
            <person name="Yang X."/>
            <person name="Piloto O."/>
            <person name="Levis M."/>
            <person name="Small D."/>
        </authorList>
    </citation>
    <scope>FUNCTION</scope>
    <scope>ACTIVITY REGULATION</scope>
</reference>
<reference key="25">
    <citation type="journal article" date="2003" name="Nat. Rev. Cancer">
        <title>The role of FLT3 in haematopoietic malignancies.</title>
        <authorList>
            <person name="Stirewalt D.L."/>
            <person name="Radich J.P."/>
        </authorList>
    </citation>
    <scope>REVIEW</scope>
</reference>
<reference key="26">
    <citation type="journal article" date="2009" name="Clin. Cancer Res.">
        <title>Structural and functional alterations of FLT3 in acute myeloid leukemia.</title>
        <authorList>
            <person name="Meshinchi S."/>
            <person name="Appelbaum F.R."/>
        </authorList>
    </citation>
    <scope>REVIEW</scope>
</reference>
<reference key="27">
    <citation type="journal article" date="2018" name="MBio">
        <title>Human Cytomegalovirus Encodes a Novel FLT3 Receptor Ligand Necessary for Hematopoietic Cell Differentiation and Viral Reactivation.</title>
        <authorList>
            <person name="Crawford L.B."/>
            <person name="Kim J.H."/>
            <person name="Collins-McMillen D."/>
            <person name="Lee B.J."/>
            <person name="Landais I."/>
            <person name="Held C."/>
            <person name="Nelson J.A."/>
            <person name="Yurochko A.D."/>
            <person name="Caposio P."/>
        </authorList>
    </citation>
    <scope>INTERACTION WITH HUMAN CYTOMEGALOVIRUS PROTEIN UL7</scope>
</reference>
<reference key="28">
    <citation type="journal article" date="2004" name="Mol. Cell">
        <title>The structural basis for autoinhibition of FLT3 by the juxtamembrane domain.</title>
        <authorList>
            <person name="Griffith J."/>
            <person name="Black J."/>
            <person name="Faerman C."/>
            <person name="Swenson L."/>
            <person name="Wynn M."/>
            <person name="Lu F."/>
            <person name="Lippke J."/>
            <person name="Saxena K."/>
        </authorList>
    </citation>
    <scope>X-RAY CRYSTALLOGRAPHY (2.1 ANGSTROMS) OF 564-958</scope>
    <scope>ACTIVITY REGULATION</scope>
</reference>
<reference key="29">
    <citation type="journal article" date="2011" name="Blood">
        <title>Structural insights into the extracellular assembly of the hematopoietic Flt3 signaling complex.</title>
        <authorList>
            <person name="Verstraete K."/>
            <person name="Vandriessche G."/>
            <person name="Januar M."/>
            <person name="Elegheert J."/>
            <person name="Shkumatov A.V."/>
            <person name="Desfosses A."/>
            <person name="Van Craenenbroeck K."/>
            <person name="Svergun D.I."/>
            <person name="Gutsche I."/>
            <person name="Vergauwen B."/>
            <person name="Savvides S.N."/>
        </authorList>
    </citation>
    <scope>X-RAY CRYSTALLOGRAPHY (4.3 ANGSTROMS) OF 27-436 IN COMPLEX WITH FLT3LG</scope>
    <scope>SUBUNIT</scope>
    <scope>INTERACTION WITH FLT3LG</scope>
    <scope>GLYCOSYLATION AT ASN-43; ASN-100; ASN-151; ASN-306; ASN-323; ASN-351 AND ASN-354</scope>
    <scope>IDENTIFICATION BY MASS SPECTROMETRY</scope>
    <scope>DISULFIDE BONDS</scope>
</reference>
<reference key="30">
    <citation type="journal article" date="2001" name="Br. J. Haematol.">
        <title>Identification of novel FLT-3 Asp835 mutations in adult acute myeloid leukaemia.</title>
        <authorList>
            <person name="Abu-Duhier F.M."/>
            <person name="Goodeve A.C."/>
            <person name="Wilson G.A."/>
            <person name="Care R.S."/>
            <person name="Peake I.R."/>
            <person name="Reilly J.T."/>
        </authorList>
    </citation>
    <scope>VARIANTS TYR-835 DEL; HIS-835 AND TYR-835</scope>
    <scope>INVOLVEMENT IN AML</scope>
</reference>
<reference key="31">
    <citation type="journal article" date="2001" name="Blood">
        <title>Activating mutation of D835 within the activation loop of FLT3 in human hematologic malignancies.</title>
        <authorList>
            <person name="Yamamoto Y."/>
            <person name="Kiyoi H."/>
            <person name="Nakano Y."/>
            <person name="Suzuki R."/>
            <person name="Kodera Y."/>
            <person name="Miyawaki S."/>
            <person name="Asou N."/>
            <person name="Kuriyama K."/>
            <person name="Yagasaki F."/>
            <person name="Shimazaki C."/>
            <person name="Akiyama H."/>
            <person name="Saito K."/>
            <person name="Nishimura M."/>
            <person name="Motoji T."/>
            <person name="Shinagawa K."/>
            <person name="Takeshita A."/>
            <person name="Saito H."/>
            <person name="Ueda R."/>
            <person name="Ohno R."/>
            <person name="Naoe T."/>
        </authorList>
    </citation>
    <scope>VARIANTS ASN-835; GLU-835; HIS-835; VAL-835 AND TYR-835</scope>
    <scope>CHARACTERIZATION OF VARIANTS ASN-835; GLU-835; HIS-835; VAL-835 AND TYR-835</scope>
    <scope>PHOSPHORYLATION</scope>
    <scope>INVOLVEMENT IN AML</scope>
</reference>
<reference key="32">
    <citation type="journal article" date="2004" name="Blood">
        <title>FLT3 mutations in the activation loop of tyrosine kinase domain are frequently found in infant ALL with MLL rearrangements and pediatric ALL with hyperdiploidy.</title>
        <authorList>
            <person name="Taketani T."/>
            <person name="Taki T."/>
            <person name="Sugita K."/>
            <person name="Furuichi Y."/>
            <person name="Ishii E."/>
            <person name="Hanada R."/>
            <person name="Tsuchida M."/>
            <person name="Sugita K."/>
            <person name="Ida K."/>
            <person name="Hayashi Y."/>
        </authorList>
    </citation>
    <scope>VARIANTS GLU-835; HIS-835; TYR-835; ILE-836 DEL AND MET-836</scope>
    <scope>FUNCTION IN ACTIVATION OF STAT5A AND/OR STAT5B</scope>
    <scope>PHOSPHORYLATION</scope>
    <scope>INVOLVEMENT IN AML</scope>
</reference>
<reference key="33">
    <citation type="journal article" date="2007" name="Nature">
        <title>Patterns of somatic mutation in human cancer genomes.</title>
        <authorList>
            <person name="Greenman C."/>
            <person name="Stephens P."/>
            <person name="Smith R."/>
            <person name="Dalgliesh G.L."/>
            <person name="Hunter C."/>
            <person name="Bignell G."/>
            <person name="Davies H."/>
            <person name="Teague J."/>
            <person name="Butler A."/>
            <person name="Stevens C."/>
            <person name="Edkins S."/>
            <person name="O'Meara S."/>
            <person name="Vastrik I."/>
            <person name="Schmidt E.E."/>
            <person name="Avis T."/>
            <person name="Barthorpe S."/>
            <person name="Bhamra G."/>
            <person name="Buck G."/>
            <person name="Choudhury B."/>
            <person name="Clements J."/>
            <person name="Cole J."/>
            <person name="Dicks E."/>
            <person name="Forbes S."/>
            <person name="Gray K."/>
            <person name="Halliday K."/>
            <person name="Harrison R."/>
            <person name="Hills K."/>
            <person name="Hinton J."/>
            <person name="Jenkinson A."/>
            <person name="Jones D."/>
            <person name="Menzies A."/>
            <person name="Mironenko T."/>
            <person name="Perry J."/>
            <person name="Raine K."/>
            <person name="Richardson D."/>
            <person name="Shepherd R."/>
            <person name="Small A."/>
            <person name="Tofts C."/>
            <person name="Varian J."/>
            <person name="Webb T."/>
            <person name="West S."/>
            <person name="Widaa S."/>
            <person name="Yates A."/>
            <person name="Cahill D.P."/>
            <person name="Louis D.N."/>
            <person name="Goldstraw P."/>
            <person name="Nicholson A.G."/>
            <person name="Brasseur F."/>
            <person name="Looijenga L."/>
            <person name="Weber B.L."/>
            <person name="Chiew Y.-E."/>
            <person name="DeFazio A."/>
            <person name="Greaves M.F."/>
            <person name="Green A.R."/>
            <person name="Campbell P."/>
            <person name="Birney E."/>
            <person name="Easton D.F."/>
            <person name="Chenevix-Trench G."/>
            <person name="Tan M.-H."/>
            <person name="Khoo S.K."/>
            <person name="Teh B.T."/>
            <person name="Yuen S.T."/>
            <person name="Leung S.Y."/>
            <person name="Wooster R."/>
            <person name="Futreal P.A."/>
            <person name="Stratton M.R."/>
        </authorList>
    </citation>
    <scope>VARIANTS [LARGE SCALE ANALYSIS] ALA-158; MET-227; ASN-324; VAL-358 AND ILE-557</scope>
</reference>
<reference key="34">
    <citation type="journal article" date="2008" name="Nature">
        <title>DNA sequencing of a cytogenetically normal acute myeloid leukaemia genome.</title>
        <authorList>
            <person name="Ley T.J."/>
            <person name="Mardis E.R."/>
            <person name="Ding L."/>
            <person name="Fulton B."/>
            <person name="McLellan M.D."/>
            <person name="Chen K."/>
            <person name="Dooling D."/>
            <person name="Dunford-Shore B.H."/>
            <person name="McGrath S."/>
            <person name="Hickenbotham M."/>
            <person name="Cook L."/>
            <person name="Abbott R."/>
            <person name="Larson D.E."/>
            <person name="Koboldt D.C."/>
            <person name="Pohl C."/>
            <person name="Smith S."/>
            <person name="Hawkins A."/>
            <person name="Abbott S."/>
            <person name="Locke D."/>
            <person name="Hillier L.W."/>
            <person name="Miner T."/>
            <person name="Fulton L."/>
            <person name="Magrini V."/>
            <person name="Wylie T."/>
            <person name="Glasscock J."/>
            <person name="Conyers J."/>
            <person name="Sander N."/>
            <person name="Shi X."/>
            <person name="Osborne J.R."/>
            <person name="Minx P."/>
            <person name="Gordon D."/>
            <person name="Chinwalla A."/>
            <person name="Zhao Y."/>
            <person name="Ries R.E."/>
            <person name="Payton J.E."/>
            <person name="Westervelt P."/>
            <person name="Tomasson M.H."/>
            <person name="Watson M."/>
            <person name="Baty J."/>
            <person name="Ivanovich J."/>
            <person name="Heath S."/>
            <person name="Shannon W.D."/>
            <person name="Nagarajan R."/>
            <person name="Walter M.J."/>
            <person name="Link D.C."/>
            <person name="Graubert T.A."/>
            <person name="DiPersio J.F."/>
            <person name="Wilson R.K."/>
        </authorList>
    </citation>
    <scope>VARIANT [LARGE SCALE ANALYSIS] MET-194</scope>
</reference>
<accession>P36888</accession>
<accession>A0AVG9</accession>
<accession>B7ZLT7</accession>
<accession>B7ZLT8</accession>
<accession>F5H0A0</accession>
<accession>Q13414</accession>
<keyword id="KW-0002">3D-structure</keyword>
<keyword id="KW-0025">Alternative splicing</keyword>
<keyword id="KW-0067">ATP-binding</keyword>
<keyword id="KW-0225">Disease variant</keyword>
<keyword id="KW-1015">Disulfide bond</keyword>
<keyword id="KW-0256">Endoplasmic reticulum</keyword>
<keyword id="KW-0325">Glycoprotein</keyword>
<keyword id="KW-0945">Host-virus interaction</keyword>
<keyword id="KW-0393">Immunoglobulin domain</keyword>
<keyword id="KW-0418">Kinase</keyword>
<keyword id="KW-0472">Membrane</keyword>
<keyword id="KW-0547">Nucleotide-binding</keyword>
<keyword id="KW-0597">Phosphoprotein</keyword>
<keyword id="KW-1267">Proteomics identification</keyword>
<keyword id="KW-0656">Proto-oncogene</keyword>
<keyword id="KW-0675">Receptor</keyword>
<keyword id="KW-1185">Reference proteome</keyword>
<keyword id="KW-0732">Signal</keyword>
<keyword id="KW-0808">Transferase</keyword>
<keyword id="KW-0812">Transmembrane</keyword>
<keyword id="KW-1133">Transmembrane helix</keyword>
<keyword id="KW-0829">Tyrosine-protein kinase</keyword>
<keyword id="KW-0832">Ubl conjugation</keyword>
<feature type="signal peptide" evidence="2">
    <location>
        <begin position="1"/>
        <end position="26"/>
    </location>
</feature>
<feature type="chain" id="PRO_0000016778" description="Receptor-type tyrosine-protein kinase FLT3">
    <location>
        <begin position="27"/>
        <end position="993"/>
    </location>
</feature>
<feature type="topological domain" description="Extracellular" evidence="2">
    <location>
        <begin position="27"/>
        <end position="543"/>
    </location>
</feature>
<feature type="transmembrane region" description="Helical" evidence="2">
    <location>
        <begin position="544"/>
        <end position="563"/>
    </location>
</feature>
<feature type="topological domain" description="Cytoplasmic" evidence="2">
    <location>
        <begin position="564"/>
        <end position="993"/>
    </location>
</feature>
<feature type="domain" description="Ig-like C2-type">
    <location>
        <begin position="253"/>
        <end position="343"/>
    </location>
</feature>
<feature type="domain" description="Protein kinase" evidence="4">
    <location>
        <begin position="610"/>
        <end position="943"/>
    </location>
</feature>
<feature type="region of interest" description="Important for normal regulation of the kinase activity and for maintaining the kinase in an inactive state in the absence of bound ligand">
    <location>
        <begin position="591"/>
        <end position="597"/>
    </location>
</feature>
<feature type="active site" description="Proton acceptor" evidence="4 5">
    <location>
        <position position="811"/>
    </location>
</feature>
<feature type="binding site" evidence="4">
    <location>
        <begin position="616"/>
        <end position="624"/>
    </location>
    <ligand>
        <name>ATP</name>
        <dbReference type="ChEBI" id="CHEBI:30616"/>
    </ligand>
</feature>
<feature type="binding site" evidence="36">
    <location>
        <position position="644"/>
    </location>
    <ligand>
        <name>ATP</name>
        <dbReference type="ChEBI" id="CHEBI:30616"/>
    </ligand>
</feature>
<feature type="modified residue" description="Phosphotyrosine" evidence="16 25">
    <location>
        <position position="572"/>
    </location>
</feature>
<feature type="modified residue" description="Phosphoserine" evidence="16">
    <location>
        <position position="574"/>
    </location>
</feature>
<feature type="modified residue" description="Phosphotyrosine; by autocatalysis" evidence="16 21 25">
    <location>
        <position position="589"/>
    </location>
</feature>
<feature type="modified residue" description="Phosphotyrosine; by autocatalysis" evidence="13 15 16 21 25">
    <location>
        <position position="591"/>
    </location>
</feature>
<feature type="modified residue" description="Phosphotyrosine; by autocatalysis" evidence="16 21 25">
    <location>
        <position position="599"/>
    </location>
</feature>
<feature type="modified residue" description="Phosphotyrosine; by autocatalysis" evidence="15 21">
    <location>
        <position position="726"/>
    </location>
</feature>
<feature type="modified residue" description="Phosphoserine" evidence="37">
    <location>
        <position position="759"/>
    </location>
</feature>
<feature type="modified residue" description="Phosphotyrosine" evidence="21 25">
    <location>
        <position position="768"/>
    </location>
</feature>
<feature type="modified residue" description="Phosphotyrosine" evidence="21 25">
    <location>
        <position position="793"/>
    </location>
</feature>
<feature type="modified residue" description="Phosphotyrosine; by autocatalysis" evidence="15 21 25">
    <location>
        <position position="842"/>
    </location>
</feature>
<feature type="modified residue" description="Phosphotyrosine; by autocatalysis" evidence="15 21 25">
    <location>
        <position position="955"/>
    </location>
</feature>
<feature type="modified residue" description="Phosphotyrosine; by autocatalysis" evidence="15">
    <location>
        <position position="969"/>
    </location>
</feature>
<feature type="modified residue" description="Phosphoserine" evidence="37">
    <location>
        <position position="993"/>
    </location>
</feature>
<feature type="glycosylation site" description="N-linked (GlcNAc...) asparagine" evidence="26">
    <location>
        <position position="43"/>
    </location>
</feature>
<feature type="glycosylation site" description="N-linked (GlcNAc...) asparagine" evidence="26">
    <location>
        <position position="100"/>
    </location>
</feature>
<feature type="glycosylation site" description="N-linked (GlcNAc...) asparagine" evidence="26">
    <location>
        <position position="151"/>
    </location>
</feature>
<feature type="glycosylation site" description="N-linked (GlcNAc...) asparagine" evidence="26">
    <location>
        <position position="306"/>
    </location>
</feature>
<feature type="glycosylation site" description="N-linked (GlcNAc...) asparagine" evidence="26">
    <location>
        <position position="323"/>
    </location>
</feature>
<feature type="glycosylation site" description="N-linked (GlcNAc...) asparagine" evidence="26">
    <location>
        <position position="351"/>
    </location>
</feature>
<feature type="glycosylation site" description="N-linked (GlcNAc...) asparagine" evidence="26">
    <location>
        <position position="354"/>
    </location>
</feature>
<feature type="glycosylation site" description="N-linked (GlcNAc...) asparagine">
    <location>
        <position position="473"/>
    </location>
</feature>
<feature type="glycosylation site" description="N-linked (GlcNAc...) asparagine">
    <location>
        <position position="502"/>
    </location>
</feature>
<feature type="glycosylation site" description="N-linked (GlcNAc...) asparagine" evidence="2">
    <location>
        <position position="541"/>
    </location>
</feature>
<feature type="disulfide bond" evidence="3 26">
    <location>
        <begin position="35"/>
        <end position="65"/>
    </location>
</feature>
<feature type="disulfide bond" evidence="3 26">
    <location>
        <begin position="103"/>
        <end position="114"/>
    </location>
</feature>
<feature type="disulfide bond" evidence="3 26">
    <location>
        <begin position="199"/>
        <end position="206"/>
    </location>
</feature>
<feature type="disulfide bond" evidence="3 26">
    <location>
        <begin position="232"/>
        <end position="241"/>
    </location>
</feature>
<feature type="disulfide bond" evidence="3 26">
    <location>
        <begin position="272"/>
        <end position="330"/>
    </location>
</feature>
<feature type="disulfide bond" evidence="3 26">
    <location>
        <begin position="368"/>
        <end position="407"/>
    </location>
</feature>
<feature type="disulfide bond" evidence="3 26">
    <location>
        <begin position="381"/>
        <end position="392"/>
    </location>
</feature>
<feature type="splice variant" id="VSP_041796" description="In isoform 2." evidence="35">
    <location>
        <begin position="807"/>
        <end position="847"/>
    </location>
</feature>
<feature type="sequence variant" id="VAR_034677" description="In dbSNP:rs12872889.">
    <original>D</original>
    <variation>G</variation>
    <location>
        <position position="7"/>
    </location>
</feature>
<feature type="sequence variant" id="VAR_042069" description="In dbSNP:rs56321896." evidence="17">
    <original>V</original>
    <variation>A</variation>
    <location>
        <position position="158"/>
    </location>
</feature>
<feature type="sequence variant" id="VAR_054149" description="In dbSNP:rs146030737." evidence="20">
    <original>V</original>
    <variation>M</variation>
    <location>
        <position position="194"/>
    </location>
</feature>
<feature type="sequence variant" id="VAR_034678" description="In dbSNP:rs1933437." evidence="12 17 30 34">
    <original>T</original>
    <variation>M</variation>
    <location>
        <position position="227"/>
    </location>
</feature>
<feature type="sequence variant" id="VAR_042070" description="In dbSNP:rs35602083." evidence="17">
    <original>D</original>
    <variation>N</variation>
    <location>
        <position position="324"/>
    </location>
</feature>
<feature type="sequence variant" id="VAR_042071" description="In dbSNP:rs34172843." evidence="17">
    <original>D</original>
    <variation>V</variation>
    <location>
        <position position="358"/>
    </location>
</feature>
<feature type="sequence variant" id="VAR_061291" description="In dbSNP:rs56090538.">
    <original>I</original>
    <variation>L</variation>
    <location>
        <position position="417"/>
    </location>
</feature>
<feature type="sequence variant" id="VAR_042072" description="In dbSNP:rs35958982." evidence="17">
    <original>V</original>
    <variation>I</variation>
    <location>
        <position position="557"/>
    </location>
</feature>
<feature type="sequence variant" id="VAR_065679" description="In acute lymphoblastic leukemia patients and acute myelogenous leukemia patients; somatic mutation; constitutively activated; dbSNP:rs121913487." evidence="8 10">
    <original>D</original>
    <variation>E</variation>
    <location>
        <position position="835"/>
    </location>
</feature>
<feature type="sequence variant" id="VAR_065680" description="In acute lymphoblastic leukemia patients and in acute myelogenous leukemia patients; somatic mutation; constitutively activated; dbSNP:rs121913488." evidence="8 9 10">
    <original>D</original>
    <variation>H</variation>
    <location>
        <position position="835"/>
    </location>
</feature>
<feature type="sequence variant" id="VAR_065681" description="In acute lymphoblastic leukemia patients and in acute myelogenous leukemia patients; somatic mutation; constitutively activated; dbSNP:rs121913488." evidence="8">
    <original>D</original>
    <variation>N</variation>
    <location>
        <position position="835"/>
    </location>
</feature>
<feature type="sequence variant" id="VAR_065682" description="In acute lymphoblastic leukemia patients and in acute myelogenous leukemia patients; somatic mutation; constitutively activated; dbSNP:rs121909646." evidence="8">
    <original>D</original>
    <variation>V</variation>
    <location>
        <position position="835"/>
    </location>
</feature>
<feature type="sequence variant" id="VAR_065683" description="In acute lymphoblastic leukemia patients and in acute myelogenous leukemia patients; somatic mutation; constitutively activated; dbSNP:rs121913488." evidence="8 9 10">
    <original>D</original>
    <variation>Y</variation>
    <location>
        <position position="835"/>
    </location>
</feature>
<feature type="sequence variant" id="VAR_065684" description="In acute lymphoblastic leukemia patients; somatic mutation; dbSNP:rs121913232." evidence="10">
    <original>I</original>
    <variation>M</variation>
    <location>
        <position position="836"/>
    </location>
</feature>
<feature type="mutagenesis site" description="Reduced phosphorylation of the wild-type kinase in response to ligand binding. No effect on the phosphorylation of the constitutively activated mutant kinase variants. Abolishes activation of STAT5A." evidence="15 16 33">
    <original>Y</original>
    <variation>F</variation>
    <location>
        <position position="589"/>
    </location>
</feature>
<feature type="mutagenesis site" description="No significant effect on tyrosine phosphorylation. Abolishes activation of STAT5A." evidence="15 33">
    <original>Y</original>
    <variation>F</variation>
    <location>
        <position position="591"/>
    </location>
</feature>
<feature type="mutagenesis site" description="Abolishes interaction with PTPN11/SHP2 and phosphorylation of PTPN11/SHP2." evidence="16">
    <original>Y</original>
    <variation>F</variation>
    <location>
        <position position="599"/>
    </location>
</feature>
<feature type="mutagenesis site" description="Abolishes kinase activity." evidence="13">
    <original>K</original>
    <variation>A</variation>
    <location>
        <position position="644"/>
    </location>
</feature>
<feature type="sequence conflict" description="In Ref. 1; AAA18947." evidence="36" ref="1">
    <original>G</original>
    <variation>A</variation>
    <location>
        <position position="8"/>
    </location>
</feature>
<feature type="sequence conflict" description="In Ref. 1; AAA18947." evidence="36" ref="1">
    <original>QL</original>
    <variation>TV</variation>
    <location>
        <begin position="10"/>
        <end position="11"/>
    </location>
</feature>
<feature type="sequence conflict" description="In Ref. 5; AAI44040." evidence="36" ref="5">
    <original>S</original>
    <variation>N</variation>
    <location>
        <position position="71"/>
    </location>
</feature>
<feature type="sequence conflict" description="In Ref. 2; CAA81393." evidence="36" ref="2">
    <original>A</original>
    <variation>R</variation>
    <location>
        <position position="78"/>
    </location>
</feature>
<feature type="sequence conflict" description="In Ref. 1; AAA18947." evidence="36" ref="1">
    <original>E</original>
    <variation>G</variation>
    <location>
        <position position="346"/>
    </location>
</feature>
<feature type="sequence conflict" description="In Ref. 6; AAA35487." evidence="36" ref="6">
    <original>T</original>
    <variation>H</variation>
    <location>
        <position position="940"/>
    </location>
</feature>
<feature type="strand" evidence="38">
    <location>
        <begin position="575"/>
        <end position="581"/>
    </location>
</feature>
<feature type="strand" evidence="38">
    <location>
        <begin position="583"/>
        <end position="585"/>
    </location>
</feature>
<feature type="strand" evidence="38">
    <location>
        <begin position="589"/>
        <end position="591"/>
    </location>
</feature>
<feature type="helix" evidence="38">
    <location>
        <begin position="594"/>
        <end position="596"/>
    </location>
</feature>
<feature type="helix" evidence="38">
    <location>
        <begin position="601"/>
        <end position="603"/>
    </location>
</feature>
<feature type="helix" evidence="38">
    <location>
        <begin position="607"/>
        <end position="609"/>
    </location>
</feature>
<feature type="strand" evidence="38">
    <location>
        <begin position="610"/>
        <end position="618"/>
    </location>
</feature>
<feature type="strand" evidence="38">
    <location>
        <begin position="620"/>
        <end position="631"/>
    </location>
</feature>
<feature type="strand" evidence="38">
    <location>
        <begin position="633"/>
        <end position="636"/>
    </location>
</feature>
<feature type="strand" evidence="38">
    <location>
        <begin position="638"/>
        <end position="646"/>
    </location>
</feature>
<feature type="helix" evidence="38">
    <location>
        <begin position="656"/>
        <end position="668"/>
    </location>
</feature>
<feature type="strand" evidence="38">
    <location>
        <begin position="677"/>
        <end position="681"/>
    </location>
</feature>
<feature type="strand" evidence="38">
    <location>
        <begin position="683"/>
        <end position="686"/>
    </location>
</feature>
<feature type="strand" evidence="38">
    <location>
        <begin position="688"/>
        <end position="692"/>
    </location>
</feature>
<feature type="helix" evidence="38">
    <location>
        <begin position="699"/>
        <end position="704"/>
    </location>
</feature>
<feature type="turn" evidence="38">
    <location>
        <begin position="705"/>
        <end position="708"/>
    </location>
</feature>
<feature type="helix" evidence="38">
    <location>
        <begin position="785"/>
        <end position="804"/>
    </location>
</feature>
<feature type="strand" evidence="38">
    <location>
        <begin position="807"/>
        <end position="809"/>
    </location>
</feature>
<feature type="helix" evidence="38">
    <location>
        <begin position="814"/>
        <end position="816"/>
    </location>
</feature>
<feature type="strand" evidence="38">
    <location>
        <begin position="817"/>
        <end position="820"/>
    </location>
</feature>
<feature type="turn" evidence="38">
    <location>
        <begin position="821"/>
        <end position="823"/>
    </location>
</feature>
<feature type="strand" evidence="38">
    <location>
        <begin position="824"/>
        <end position="827"/>
    </location>
</feature>
<feature type="helix" evidence="38">
    <location>
        <begin position="831"/>
        <end position="833"/>
    </location>
</feature>
<feature type="helix" evidence="38">
    <location>
        <begin position="836"/>
        <end position="838"/>
    </location>
</feature>
<feature type="strand" evidence="38">
    <location>
        <begin position="842"/>
        <end position="845"/>
    </location>
</feature>
<feature type="strand" evidence="38">
    <location>
        <begin position="848"/>
        <end position="850"/>
    </location>
</feature>
<feature type="helix" evidence="38">
    <location>
        <begin position="852"/>
        <end position="854"/>
    </location>
</feature>
<feature type="helix" evidence="38">
    <location>
        <begin position="857"/>
        <end position="862"/>
    </location>
</feature>
<feature type="helix" evidence="38">
    <location>
        <begin position="867"/>
        <end position="881"/>
    </location>
</feature>
<feature type="turn" evidence="38">
    <location>
        <begin position="882"/>
        <end position="884"/>
    </location>
</feature>
<feature type="helix" evidence="38">
    <location>
        <begin position="896"/>
        <end position="903"/>
    </location>
</feature>
<feature type="helix" evidence="38">
    <location>
        <begin position="916"/>
        <end position="925"/>
    </location>
</feature>
<feature type="helix" evidence="38">
    <location>
        <begin position="930"/>
        <end position="932"/>
    </location>
</feature>
<feature type="helix" evidence="38">
    <location>
        <begin position="936"/>
        <end position="946"/>
    </location>
</feature>